<dbReference type="EMBL" id="U04847">
    <property type="protein sequence ID" value="AAA81905.1"/>
    <property type="molecule type" value="mRNA"/>
</dbReference>
<dbReference type="EMBL" id="Y17118">
    <property type="protein sequence ID" value="CAA76639.1"/>
    <property type="status" value="ALT_SEQ"/>
    <property type="molecule type" value="Genomic_DNA"/>
</dbReference>
<dbReference type="EMBL" id="Y17119">
    <property type="protein sequence ID" value="CAA76639.1"/>
    <property type="status" value="JOINED"/>
    <property type="molecule type" value="Genomic_DNA"/>
</dbReference>
<dbReference type="EMBL" id="Y17120">
    <property type="protein sequence ID" value="CAA76639.1"/>
    <property type="status" value="JOINED"/>
    <property type="molecule type" value="Genomic_DNA"/>
</dbReference>
<dbReference type="EMBL" id="Y17121">
    <property type="protein sequence ID" value="CAA76639.1"/>
    <property type="status" value="JOINED"/>
    <property type="molecule type" value="Genomic_DNA"/>
</dbReference>
<dbReference type="EMBL" id="Y17122">
    <property type="protein sequence ID" value="CAA76639.1"/>
    <property type="status" value="JOINED"/>
    <property type="molecule type" value="Genomic_DNA"/>
</dbReference>
<dbReference type="EMBL" id="Y17123">
    <property type="protein sequence ID" value="CAA76639.1"/>
    <property type="status" value="JOINED"/>
    <property type="molecule type" value="Genomic_DNA"/>
</dbReference>
<dbReference type="EMBL" id="Y17124">
    <property type="protein sequence ID" value="CAA76639.1"/>
    <property type="status" value="JOINED"/>
    <property type="molecule type" value="Genomic_DNA"/>
</dbReference>
<dbReference type="EMBL" id="Y17125">
    <property type="protein sequence ID" value="CAA76639.1"/>
    <property type="status" value="JOINED"/>
    <property type="molecule type" value="Genomic_DNA"/>
</dbReference>
<dbReference type="EMBL" id="Y17126">
    <property type="protein sequence ID" value="CAA76639.1"/>
    <property type="status" value="JOINED"/>
    <property type="molecule type" value="Genomic_DNA"/>
</dbReference>
<dbReference type="EMBL" id="AJ011738">
    <property type="protein sequence ID" value="CAA09759.1"/>
    <property type="molecule type" value="mRNA"/>
</dbReference>
<dbReference type="EMBL" id="AJ011737">
    <property type="protein sequence ID" value="CAA09758.1"/>
    <property type="molecule type" value="mRNA"/>
</dbReference>
<dbReference type="EMBL" id="AB017523">
    <property type="protein sequence ID" value="BAC77068.1"/>
    <property type="molecule type" value="mRNA"/>
</dbReference>
<dbReference type="EMBL" id="CR456581">
    <property type="protein sequence ID" value="CAG30467.1"/>
    <property type="molecule type" value="mRNA"/>
</dbReference>
<dbReference type="EMBL" id="AK021419">
    <property type="protein sequence ID" value="BAG51033.1"/>
    <property type="molecule type" value="mRNA"/>
</dbReference>
<dbReference type="EMBL" id="DQ230988">
    <property type="protein sequence ID" value="ABB02184.1"/>
    <property type="molecule type" value="Genomic_DNA"/>
</dbReference>
<dbReference type="EMBL" id="CH471095">
    <property type="protein sequence ID" value="EAW59606.1"/>
    <property type="molecule type" value="Genomic_DNA"/>
</dbReference>
<dbReference type="EMBL" id="BC117114">
    <property type="protein sequence ID" value="AAI17115.1"/>
    <property type="molecule type" value="mRNA"/>
</dbReference>
<dbReference type="EMBL" id="BC143667">
    <property type="protein sequence ID" value="AAI43668.1"/>
    <property type="molecule type" value="mRNA"/>
</dbReference>
<dbReference type="CCDS" id="CCDS13817.1">
    <molecule id="Q12824-1"/>
</dbReference>
<dbReference type="CCDS" id="CCDS46671.1">
    <molecule id="Q12824-2"/>
</dbReference>
<dbReference type="PIR" id="S54705">
    <property type="entry name" value="S54705"/>
</dbReference>
<dbReference type="RefSeq" id="NP_001007469.1">
    <molecule id="Q12824-2"/>
    <property type="nucleotide sequence ID" value="NM_001007468.3"/>
</dbReference>
<dbReference type="RefSeq" id="NP_003064.2">
    <molecule id="Q12824-1"/>
    <property type="nucleotide sequence ID" value="NM_003073.4"/>
</dbReference>
<dbReference type="PDB" id="5AJ1">
    <property type="method" value="NMR"/>
    <property type="chains" value="A=2-113"/>
</dbReference>
<dbReference type="PDB" id="5GJK">
    <property type="method" value="X-ray"/>
    <property type="resolution" value="2.05 A"/>
    <property type="chains" value="B=183-249"/>
</dbReference>
<dbReference type="PDB" id="5L7A">
    <property type="method" value="X-ray"/>
    <property type="resolution" value="2.10 A"/>
    <property type="chains" value="A/B/C/D=184-252"/>
</dbReference>
<dbReference type="PDB" id="5L7B">
    <property type="method" value="NMR"/>
    <property type="chains" value="A=184-258"/>
</dbReference>
<dbReference type="PDB" id="6AX5">
    <property type="method" value="NMR"/>
    <property type="chains" value="A=183-265"/>
</dbReference>
<dbReference type="PDB" id="6KAG">
    <property type="method" value="X-ray"/>
    <property type="resolution" value="2.60 A"/>
    <property type="chains" value="A=169-385"/>
</dbReference>
<dbReference type="PDB" id="6KZ7">
    <property type="method" value="X-ray"/>
    <property type="resolution" value="2.28 A"/>
    <property type="chains" value="B/D=171-252"/>
</dbReference>
<dbReference type="PDB" id="6LTH">
    <property type="method" value="EM"/>
    <property type="resolution" value="3.00 A"/>
    <property type="chains" value="M=1-385"/>
</dbReference>
<dbReference type="PDB" id="6LTJ">
    <property type="method" value="EM"/>
    <property type="resolution" value="3.70 A"/>
    <property type="chains" value="M=1-113, M=172-385"/>
</dbReference>
<dbReference type="PDB" id="6LZP">
    <property type="method" value="NMR"/>
    <property type="chains" value="A=171-258"/>
</dbReference>
<dbReference type="PDB" id="6UCH">
    <property type="method" value="NMR"/>
    <property type="chains" value="A=351-385"/>
</dbReference>
<dbReference type="PDB" id="7VDV">
    <property type="method" value="EM"/>
    <property type="resolution" value="3.40 A"/>
    <property type="chains" value="V=1-385"/>
</dbReference>
<dbReference type="PDB" id="7Y8R">
    <property type="method" value="EM"/>
    <property type="resolution" value="4.40 A"/>
    <property type="chains" value="M=1-385"/>
</dbReference>
<dbReference type="PDBsum" id="5AJ1"/>
<dbReference type="PDBsum" id="5GJK"/>
<dbReference type="PDBsum" id="5L7A"/>
<dbReference type="PDBsum" id="5L7B"/>
<dbReference type="PDBsum" id="6AX5"/>
<dbReference type="PDBsum" id="6KAG"/>
<dbReference type="PDBsum" id="6KZ7"/>
<dbReference type="PDBsum" id="6LTH"/>
<dbReference type="PDBsum" id="6LTJ"/>
<dbReference type="PDBsum" id="6LZP"/>
<dbReference type="PDBsum" id="6UCH"/>
<dbReference type="PDBsum" id="7VDV"/>
<dbReference type="PDBsum" id="7Y8R"/>
<dbReference type="BMRB" id="Q12824"/>
<dbReference type="EMDB" id="EMD-0974"/>
<dbReference type="EMDB" id="EMD-31926"/>
<dbReference type="EMDB" id="EMD-33684"/>
<dbReference type="SMR" id="Q12824"/>
<dbReference type="BioGRID" id="112482">
    <property type="interactions" value="365"/>
</dbReference>
<dbReference type="ComplexPortal" id="CPX-1164">
    <property type="entry name" value="SWI/SNF ATP-dependent chromatin remodeling complex, ACTL6A-ARID1A-SMARCA2 variant"/>
</dbReference>
<dbReference type="ComplexPortal" id="CPX-1194">
    <property type="entry name" value="Muscle cell-specific SWI/SNF ATP-dependent chromatin remodeling complex, ACTL6A-ARID1A-SMARCA2 variant"/>
</dbReference>
<dbReference type="ComplexPortal" id="CPX-1195">
    <property type="entry name" value="Embryonic stem cell-specific SWI/SNF ATP-dependent chromatin remodeling complex"/>
</dbReference>
<dbReference type="ComplexPortal" id="CPX-1196">
    <property type="entry name" value="Polybromo-associated SWI/SNF ATP-dependent chromatin remodeling complex, ACTL6B variant"/>
</dbReference>
<dbReference type="ComplexPortal" id="CPX-1199">
    <property type="entry name" value="Polybromo-associated SWI/SNF ATP-dependent chromatin remodeling complex, ACTL6A variant"/>
</dbReference>
<dbReference type="ComplexPortal" id="CPX-1201">
    <property type="entry name" value="Neural progenitor-specific SWI/SNF ATP-dependent chromatin remodeling complex, ARID1A-SMARCA2 variant"/>
</dbReference>
<dbReference type="ComplexPortal" id="CPX-1202">
    <property type="entry name" value="Neuron-specific SWI/SNF ATP-dependent chromatin remodeling complex, ARID1A-SMARCA2 variant"/>
</dbReference>
<dbReference type="ComplexPortal" id="CPX-1203">
    <property type="entry name" value="Brain-specific SWI/SNF ATP-dependent chromatin remodeling complex, ARID1A-SMARCA2 variant"/>
</dbReference>
<dbReference type="ComplexPortal" id="CPX-1204">
    <property type="entry name" value="SWI/SNF ATP-dependent chromatin remodeling complex, ACTL6A-ARID1A-SMARCA4 variant"/>
</dbReference>
<dbReference type="ComplexPortal" id="CPX-1205">
    <property type="entry name" value="SWI/SNF ATP-dependent chromatin remodeling complex, ACTL6A-ARID1B-SMARCA2 variant"/>
</dbReference>
<dbReference type="ComplexPortal" id="CPX-1206">
    <property type="entry name" value="SWI/SNF ATP-dependent chromatin remodeling complex, ACTL6A-ARID1B-SMARCA4 variant"/>
</dbReference>
<dbReference type="ComplexPortal" id="CPX-1207">
    <property type="entry name" value="SWI/SNF ATP-dependent chromatin remodeling complex, ACTL6B-ARID1A-SMARCA2 variant"/>
</dbReference>
<dbReference type="ComplexPortal" id="CPX-1209">
    <property type="entry name" value="SWI/SNF ATP-dependent chromatin remodeling complex, ACTL6B-ARID1A-SMARCA4 variant"/>
</dbReference>
<dbReference type="ComplexPortal" id="CPX-1210">
    <property type="entry name" value="SWI/SNF ATP-dependent chromatin remodeling complex, ACTL6B-ARID1B-SMARCA2 variant"/>
</dbReference>
<dbReference type="ComplexPortal" id="CPX-1211">
    <property type="entry name" value="SWI/SNF ATP-dependent chromatin remodeling complex, ACTL6B-ARID1B-SMARCA4 variant"/>
</dbReference>
<dbReference type="ComplexPortal" id="CPX-1212">
    <property type="entry name" value="Neural progenitor-specific SWI/SNF ATP-dependent chromatin remodeling complex, ARID1A-SMARCA4 variant"/>
</dbReference>
<dbReference type="ComplexPortal" id="CPX-1213">
    <property type="entry name" value="Neural progenitor-specific SWI/SNF ATP-dependent chromatin remodeling complex, ARID1B-SMARCA2 variant"/>
</dbReference>
<dbReference type="ComplexPortal" id="CPX-1215">
    <property type="entry name" value="Neural progenitor-specific SWI/SNF ATP-dependent chromatin remodeling complex, ARID1B-SMARCA4 variant"/>
</dbReference>
<dbReference type="ComplexPortal" id="CPX-1216">
    <property type="entry name" value="Neuron-specific SWI/SNF ATP-dependent chromatin remodeling complex, ARID1A-SMARCA4 variant"/>
</dbReference>
<dbReference type="ComplexPortal" id="CPX-1217">
    <property type="entry name" value="Neuron-specific SWI/SNF ATP-dependent chromatin remodeling complex, ARID1B-SMARCA2 variant"/>
</dbReference>
<dbReference type="ComplexPortal" id="CPX-1218">
    <property type="entry name" value="Neuron-specific SWI/SNF ATP-dependent chromatin remodeling complex, ARID1B-SMARCA4 variant"/>
</dbReference>
<dbReference type="ComplexPortal" id="CPX-1219">
    <property type="entry name" value="Brain-specific SWI/SNF ATP-dependent chromatin remodeling complex, ARID1A-SMARCA4 variant"/>
</dbReference>
<dbReference type="ComplexPortal" id="CPX-1220">
    <property type="entry name" value="Brain-specific SWI/SNF ATP-dependent chromatin remodeling complex, ARID1B-SMARCA2 variant"/>
</dbReference>
<dbReference type="ComplexPortal" id="CPX-1221">
    <property type="entry name" value="Brain-specific SWI/SNF ATP-dependent chromatin remodeling complex, ARID1B-SMARCA4 variant"/>
</dbReference>
<dbReference type="ComplexPortal" id="CPX-1222">
    <property type="entry name" value="Muscle cell-specific SWI/SNF ATP-dependent chromatin remodeling complex, ACTL6A-ARID1A-SMARCA4 variant"/>
</dbReference>
<dbReference type="ComplexPortal" id="CPX-1223">
    <property type="entry name" value="Muscle cell-specific SWI/SNF ATP-dependent chromatin remodeling complex, ACTL6A-ARID1B-SMARCA2 variant"/>
</dbReference>
<dbReference type="ComplexPortal" id="CPX-1224">
    <property type="entry name" value="Muscle cell-specific SWI/SNF ATP-dependent chromatin remodeling complex, ACTL6A-ARID1B-SMARCA4 variant"/>
</dbReference>
<dbReference type="ComplexPortal" id="CPX-1225">
    <property type="entry name" value="Muscle cell-specific SWI/SNF ATP-dependent chromatin remodeling complex, ACTL6B-ARID1A-SMARCA2 variant"/>
</dbReference>
<dbReference type="ComplexPortal" id="CPX-1226">
    <property type="entry name" value="Muscle cell-specific SWI/SNF ATP-dependent chromatin remodeling complex, ACTL6B-ARID1A-SMARCA4 variant"/>
</dbReference>
<dbReference type="ComplexPortal" id="CPX-1227">
    <property type="entry name" value="Muscle cell-specific SWI/SNF ATP-dependent chromatin remodeling complex, ACTL6B-ARID1B-SMARCA2 variant"/>
</dbReference>
<dbReference type="ComplexPortal" id="CPX-1228">
    <property type="entry name" value="Muscle cell-specific SWI/SNF ATP-dependent chromatin remodeling complex, ACTL6B-ARID1B-SMARCA4 variant"/>
</dbReference>
<dbReference type="CORUM" id="Q12824"/>
<dbReference type="DIP" id="DIP-27550N"/>
<dbReference type="FunCoup" id="Q12824">
    <property type="interactions" value="1782"/>
</dbReference>
<dbReference type="IntAct" id="Q12824">
    <property type="interactions" value="336"/>
</dbReference>
<dbReference type="MINT" id="Q12824"/>
<dbReference type="STRING" id="9606.ENSP00000340883"/>
<dbReference type="GlyGen" id="Q12824">
    <property type="glycosylation" value="1 site, 1 O-linked glycan (1 site)"/>
</dbReference>
<dbReference type="iPTMnet" id="Q12824"/>
<dbReference type="PhosphoSitePlus" id="Q12824"/>
<dbReference type="SwissPalm" id="Q12824"/>
<dbReference type="BioMuta" id="SMARCB1"/>
<dbReference type="DMDM" id="51338799"/>
<dbReference type="jPOST" id="Q12824"/>
<dbReference type="MassIVE" id="Q12824"/>
<dbReference type="PaxDb" id="9606-ENSP00000263121"/>
<dbReference type="PeptideAtlas" id="Q12824"/>
<dbReference type="ProteomicsDB" id="58970">
    <molecule id="Q12824-1"/>
</dbReference>
<dbReference type="ProteomicsDB" id="58971">
    <molecule id="Q12824-2"/>
</dbReference>
<dbReference type="Pumba" id="Q12824"/>
<dbReference type="Antibodypedia" id="3973">
    <property type="antibodies" value="596 antibodies from 44 providers"/>
</dbReference>
<dbReference type="DNASU" id="6598"/>
<dbReference type="Ensembl" id="ENST00000407422.8">
    <molecule id="Q12824-2"/>
    <property type="protein sequence ID" value="ENSP00000383984.3"/>
    <property type="gene ID" value="ENSG00000099956.20"/>
</dbReference>
<dbReference type="Ensembl" id="ENST00000618915.3">
    <molecule id="Q12824-1"/>
    <property type="protein sequence ID" value="ENSP00000479330.1"/>
    <property type="gene ID" value="ENSG00000275837.3"/>
</dbReference>
<dbReference type="Ensembl" id="ENST00000631333.2">
    <molecule id="Q12824-2"/>
    <property type="protein sequence ID" value="ENSP00000486870.1"/>
    <property type="gene ID" value="ENSG00000275837.3"/>
</dbReference>
<dbReference type="Ensembl" id="ENST00000644036.2">
    <molecule id="Q12824-1"/>
    <property type="protein sequence ID" value="ENSP00000494049.2"/>
    <property type="gene ID" value="ENSG00000099956.20"/>
</dbReference>
<dbReference type="GeneID" id="6598"/>
<dbReference type="KEGG" id="hsa:6598"/>
<dbReference type="MANE-Select" id="ENST00000644036.2">
    <property type="protein sequence ID" value="ENSP00000494049.2"/>
    <property type="RefSeq nucleotide sequence ID" value="NM_003073.5"/>
    <property type="RefSeq protein sequence ID" value="NP_003064.2"/>
</dbReference>
<dbReference type="UCSC" id="uc002zyb.4">
    <molecule id="Q12824-1"/>
    <property type="organism name" value="human"/>
</dbReference>
<dbReference type="AGR" id="HGNC:11103"/>
<dbReference type="CTD" id="6598"/>
<dbReference type="DisGeNET" id="6598"/>
<dbReference type="GeneCards" id="SMARCB1"/>
<dbReference type="GeneReviews" id="SMARCB1"/>
<dbReference type="HGNC" id="HGNC:11103">
    <property type="gene designation" value="SMARCB1"/>
</dbReference>
<dbReference type="HPA" id="ENSG00000099956">
    <property type="expression patterns" value="Low tissue specificity"/>
</dbReference>
<dbReference type="MalaCards" id="SMARCB1"/>
<dbReference type="MIM" id="162091">
    <property type="type" value="phenotype"/>
</dbReference>
<dbReference type="MIM" id="601607">
    <property type="type" value="gene"/>
</dbReference>
<dbReference type="MIM" id="609322">
    <property type="type" value="phenotype"/>
</dbReference>
<dbReference type="MIM" id="614608">
    <property type="type" value="phenotype"/>
</dbReference>
<dbReference type="neXtProt" id="NX_Q12824"/>
<dbReference type="OpenTargets" id="ENSG00000099956"/>
<dbReference type="Orphanet" id="99966">
    <property type="disease" value="Atypical teratoid rhabdoid tumor"/>
</dbReference>
<dbReference type="Orphanet" id="1465">
    <property type="disease" value="Coffin-Siris syndrome"/>
</dbReference>
<dbReference type="Orphanet" id="263662">
    <property type="disease" value="Familial multiple meningioma"/>
</dbReference>
<dbReference type="Orphanet" id="93921">
    <property type="disease" value="Full schwannomatosis"/>
</dbReference>
<dbReference type="Orphanet" id="2495">
    <property type="disease" value="Meningioma"/>
</dbReference>
<dbReference type="Orphanet" id="231108">
    <property type="disease" value="Rhabdoid tumor predisposition syndrome"/>
</dbReference>
<dbReference type="PharmGKB" id="PA35953"/>
<dbReference type="VEuPathDB" id="HostDB:ENSG00000099956"/>
<dbReference type="eggNOG" id="KOG1649">
    <property type="taxonomic scope" value="Eukaryota"/>
</dbReference>
<dbReference type="GeneTree" id="ENSGT00440000038585"/>
<dbReference type="InParanoid" id="Q12824"/>
<dbReference type="OrthoDB" id="515064at2759"/>
<dbReference type="PAN-GO" id="Q12824">
    <property type="GO annotations" value="7 GO annotations based on evolutionary models"/>
</dbReference>
<dbReference type="PhylomeDB" id="Q12824"/>
<dbReference type="TreeFam" id="TF105993"/>
<dbReference type="PathwayCommons" id="Q12824"/>
<dbReference type="Reactome" id="R-HSA-3214858">
    <property type="pathway name" value="RMTs methylate histone arginines"/>
</dbReference>
<dbReference type="Reactome" id="R-HSA-8939243">
    <property type="pathway name" value="RUNX1 interacts with co-factors whose precise effect on RUNX1 targets is not known"/>
</dbReference>
<dbReference type="Reactome" id="R-HSA-9824585">
    <property type="pathway name" value="Regulation of MITF-M-dependent genes involved in pigmentation"/>
</dbReference>
<dbReference type="Reactome" id="R-HSA-9845323">
    <property type="pathway name" value="Regulation of endogenous retroelements by Piwi-interacting RNAs (piRNAs)"/>
</dbReference>
<dbReference type="SignaLink" id="Q12824"/>
<dbReference type="SIGNOR" id="Q12824"/>
<dbReference type="BioGRID-ORCS" id="6598">
    <property type="hits" value="637 hits in 1215 CRISPR screens"/>
</dbReference>
<dbReference type="ChiTaRS" id="SMARCB1">
    <property type="organism name" value="human"/>
</dbReference>
<dbReference type="EvolutionaryTrace" id="Q12824"/>
<dbReference type="GeneWiki" id="SMARCB1"/>
<dbReference type="GenomeRNAi" id="6598"/>
<dbReference type="Pharos" id="Q12824">
    <property type="development level" value="Tbio"/>
</dbReference>
<dbReference type="PRO" id="PR:Q12824"/>
<dbReference type="Proteomes" id="UP000005640">
    <property type="component" value="Chromosome 22"/>
</dbReference>
<dbReference type="RNAct" id="Q12824">
    <property type="molecule type" value="protein"/>
</dbReference>
<dbReference type="Bgee" id="ENSG00000099956">
    <property type="expression patterns" value="Expressed in ganglionic eminence and 143 other cell types or tissues"/>
</dbReference>
<dbReference type="ExpressionAtlas" id="Q12824">
    <property type="expression patterns" value="baseline and differential"/>
</dbReference>
<dbReference type="GO" id="GO:0140092">
    <property type="term" value="C:bBAF complex"/>
    <property type="evidence" value="ECO:0000303"/>
    <property type="project" value="ComplexPortal"/>
</dbReference>
<dbReference type="GO" id="GO:0035060">
    <property type="term" value="C:brahma complex"/>
    <property type="evidence" value="ECO:0000318"/>
    <property type="project" value="GO_Central"/>
</dbReference>
<dbReference type="GO" id="GO:0000785">
    <property type="term" value="C:chromatin"/>
    <property type="evidence" value="ECO:0007005"/>
    <property type="project" value="UniProtKB"/>
</dbReference>
<dbReference type="GO" id="GO:0001650">
    <property type="term" value="C:fibrillar center"/>
    <property type="evidence" value="ECO:0000314"/>
    <property type="project" value="HPA"/>
</dbReference>
<dbReference type="GO" id="GO:0043073">
    <property type="term" value="C:germ cell nucleus"/>
    <property type="evidence" value="ECO:0007669"/>
    <property type="project" value="Ensembl"/>
</dbReference>
<dbReference type="GO" id="GO:0043231">
    <property type="term" value="C:intracellular membrane-bounded organelle"/>
    <property type="evidence" value="ECO:0000314"/>
    <property type="project" value="HPA"/>
</dbReference>
<dbReference type="GO" id="GO:0000776">
    <property type="term" value="C:kinetochore"/>
    <property type="evidence" value="ECO:0000303"/>
    <property type="project" value="ComplexPortal"/>
</dbReference>
<dbReference type="GO" id="GO:0071565">
    <property type="term" value="C:nBAF complex"/>
    <property type="evidence" value="ECO:0000250"/>
    <property type="project" value="UniProtKB"/>
</dbReference>
<dbReference type="GO" id="GO:0071564">
    <property type="term" value="C:npBAF complex"/>
    <property type="evidence" value="ECO:0000250"/>
    <property type="project" value="UniProtKB"/>
</dbReference>
<dbReference type="GO" id="GO:0000228">
    <property type="term" value="C:nuclear chromosome"/>
    <property type="evidence" value="ECO:0007669"/>
    <property type="project" value="InterPro"/>
</dbReference>
<dbReference type="GO" id="GO:0016363">
    <property type="term" value="C:nuclear matrix"/>
    <property type="evidence" value="ECO:0000303"/>
    <property type="project" value="ComplexPortal"/>
</dbReference>
<dbReference type="GO" id="GO:0005730">
    <property type="term" value="C:nucleolus"/>
    <property type="evidence" value="ECO:0000314"/>
    <property type="project" value="UniProtKB"/>
</dbReference>
<dbReference type="GO" id="GO:0005654">
    <property type="term" value="C:nucleoplasm"/>
    <property type="evidence" value="ECO:0000314"/>
    <property type="project" value="HPA"/>
</dbReference>
<dbReference type="GO" id="GO:0005634">
    <property type="term" value="C:nucleus"/>
    <property type="evidence" value="ECO:0000314"/>
    <property type="project" value="UniProtKB"/>
</dbReference>
<dbReference type="GO" id="GO:0032991">
    <property type="term" value="C:protein-containing complex"/>
    <property type="evidence" value="ECO:0007005"/>
    <property type="project" value="UniProtKB"/>
</dbReference>
<dbReference type="GO" id="GO:0016586">
    <property type="term" value="C:RSC-type complex"/>
    <property type="evidence" value="ECO:0000303"/>
    <property type="project" value="ComplexPortal"/>
</dbReference>
<dbReference type="GO" id="GO:0016514">
    <property type="term" value="C:SWI/SNF complex"/>
    <property type="evidence" value="ECO:0000314"/>
    <property type="project" value="UniProtKB"/>
</dbReference>
<dbReference type="GO" id="GO:0001741">
    <property type="term" value="C:XY body"/>
    <property type="evidence" value="ECO:0007669"/>
    <property type="project" value="Ensembl"/>
</dbReference>
<dbReference type="GO" id="GO:0003677">
    <property type="term" value="F:DNA binding"/>
    <property type="evidence" value="ECO:0000314"/>
    <property type="project" value="UniProtKB"/>
</dbReference>
<dbReference type="GO" id="GO:0042802">
    <property type="term" value="F:identical protein binding"/>
    <property type="evidence" value="ECO:0000353"/>
    <property type="project" value="IntAct"/>
</dbReference>
<dbReference type="GO" id="GO:0002039">
    <property type="term" value="F:p53 binding"/>
    <property type="evidence" value="ECO:0000353"/>
    <property type="project" value="BHF-UCL"/>
</dbReference>
<dbReference type="GO" id="GO:0030957">
    <property type="term" value="F:Tat protein binding"/>
    <property type="evidence" value="ECO:0000353"/>
    <property type="project" value="BHF-UCL"/>
</dbReference>
<dbReference type="GO" id="GO:0003713">
    <property type="term" value="F:transcription coactivator activity"/>
    <property type="evidence" value="ECO:0000314"/>
    <property type="project" value="BHF-UCL"/>
</dbReference>
<dbReference type="GO" id="GO:0001835">
    <property type="term" value="P:blastocyst hatching"/>
    <property type="evidence" value="ECO:0007669"/>
    <property type="project" value="Ensembl"/>
</dbReference>
<dbReference type="GO" id="GO:0006338">
    <property type="term" value="P:chromatin remodeling"/>
    <property type="evidence" value="ECO:0000314"/>
    <property type="project" value="BHF-UCL"/>
</dbReference>
<dbReference type="GO" id="GO:0015074">
    <property type="term" value="P:DNA integration"/>
    <property type="evidence" value="ECO:0000304"/>
    <property type="project" value="ProtInc"/>
</dbReference>
<dbReference type="GO" id="GO:0070365">
    <property type="term" value="P:hepatocyte differentiation"/>
    <property type="evidence" value="ECO:0007669"/>
    <property type="project" value="Ensembl"/>
</dbReference>
<dbReference type="GO" id="GO:0008285">
    <property type="term" value="P:negative regulation of cell population proliferation"/>
    <property type="evidence" value="ECO:0007669"/>
    <property type="project" value="Ensembl"/>
</dbReference>
<dbReference type="GO" id="GO:0007399">
    <property type="term" value="P:nervous system development"/>
    <property type="evidence" value="ECO:0007669"/>
    <property type="project" value="UniProtKB-KW"/>
</dbReference>
<dbReference type="GO" id="GO:0006337">
    <property type="term" value="P:nucleosome disassembly"/>
    <property type="evidence" value="ECO:0000314"/>
    <property type="project" value="BHF-UCL"/>
</dbReference>
<dbReference type="GO" id="GO:0043923">
    <property type="term" value="P:positive regulation by host of viral transcription"/>
    <property type="evidence" value="ECO:0000315"/>
    <property type="project" value="BHF-UCL"/>
</dbReference>
<dbReference type="GO" id="GO:0045597">
    <property type="term" value="P:positive regulation of cell differentiation"/>
    <property type="evidence" value="ECO:0000303"/>
    <property type="project" value="ComplexPortal"/>
</dbReference>
<dbReference type="GO" id="GO:2000781">
    <property type="term" value="P:positive regulation of double-strand break repair"/>
    <property type="evidence" value="ECO:0000303"/>
    <property type="project" value="ComplexPortal"/>
</dbReference>
<dbReference type="GO" id="GO:1902661">
    <property type="term" value="P:positive regulation of glucose mediated signaling pathway"/>
    <property type="evidence" value="ECO:0000314"/>
    <property type="project" value="UniProtKB"/>
</dbReference>
<dbReference type="GO" id="GO:0045663">
    <property type="term" value="P:positive regulation of myoblast differentiation"/>
    <property type="evidence" value="ECO:0000303"/>
    <property type="project" value="ComplexPortal"/>
</dbReference>
<dbReference type="GO" id="GO:1902459">
    <property type="term" value="P:positive regulation of stem cell population maintenance"/>
    <property type="evidence" value="ECO:0000303"/>
    <property type="project" value="ComplexPortal"/>
</dbReference>
<dbReference type="GO" id="GO:0045582">
    <property type="term" value="P:positive regulation of T cell differentiation"/>
    <property type="evidence" value="ECO:0000303"/>
    <property type="project" value="ComplexPortal"/>
</dbReference>
<dbReference type="GO" id="GO:0045944">
    <property type="term" value="P:positive regulation of transcription by RNA polymerase II"/>
    <property type="evidence" value="ECO:0000314"/>
    <property type="project" value="BHF-UCL"/>
</dbReference>
<dbReference type="GO" id="GO:1901838">
    <property type="term" value="P:positive regulation of transcription of nucleolar large rRNA by RNA polymerase I"/>
    <property type="evidence" value="ECO:0000315"/>
    <property type="project" value="UniProtKB"/>
</dbReference>
<dbReference type="GO" id="GO:0070316">
    <property type="term" value="P:regulation of G0 to G1 transition"/>
    <property type="evidence" value="ECO:0000303"/>
    <property type="project" value="ComplexPortal"/>
</dbReference>
<dbReference type="GO" id="GO:2000045">
    <property type="term" value="P:regulation of G1/S transition of mitotic cell cycle"/>
    <property type="evidence" value="ECO:0000303"/>
    <property type="project" value="ComplexPortal"/>
</dbReference>
<dbReference type="GO" id="GO:0030071">
    <property type="term" value="P:regulation of mitotic metaphase/anaphase transition"/>
    <property type="evidence" value="ECO:0000303"/>
    <property type="project" value="ComplexPortal"/>
</dbReference>
<dbReference type="GO" id="GO:2000819">
    <property type="term" value="P:regulation of nucleotide-excision repair"/>
    <property type="evidence" value="ECO:0000303"/>
    <property type="project" value="ComplexPortal"/>
</dbReference>
<dbReference type="GO" id="GO:0006357">
    <property type="term" value="P:regulation of transcription by RNA polymerase II"/>
    <property type="evidence" value="ECO:0000318"/>
    <property type="project" value="GO_Central"/>
</dbReference>
<dbReference type="GO" id="GO:0001188">
    <property type="term" value="P:RNA polymerase I preinitiation complex assembly"/>
    <property type="evidence" value="ECO:0007669"/>
    <property type="project" value="GOC"/>
</dbReference>
<dbReference type="GO" id="GO:0039692">
    <property type="term" value="P:single stranded viral RNA replication via double stranded DNA intermediate"/>
    <property type="evidence" value="ECO:0000314"/>
    <property type="project" value="MGI"/>
</dbReference>
<dbReference type="GO" id="GO:0045815">
    <property type="term" value="P:transcription initiation-coupled chromatin remodeling"/>
    <property type="evidence" value="ECO:0000315"/>
    <property type="project" value="UniProtKB"/>
</dbReference>
<dbReference type="CDD" id="cd21086">
    <property type="entry name" value="WH_NTD_SMARCB1"/>
    <property type="match status" value="1"/>
</dbReference>
<dbReference type="InterPro" id="IPR048664">
    <property type="entry name" value="INI1_DNA-bd"/>
</dbReference>
<dbReference type="InterPro" id="IPR017393">
    <property type="entry name" value="Sfh1/SNF5"/>
</dbReference>
<dbReference type="InterPro" id="IPR006939">
    <property type="entry name" value="SNF5"/>
</dbReference>
<dbReference type="PANTHER" id="PTHR10019">
    <property type="entry name" value="SNF5"/>
    <property type="match status" value="1"/>
</dbReference>
<dbReference type="Pfam" id="PF21459">
    <property type="entry name" value="INI1_DNA-bd"/>
    <property type="match status" value="1"/>
</dbReference>
<dbReference type="Pfam" id="PF04855">
    <property type="entry name" value="SNF5"/>
    <property type="match status" value="1"/>
</dbReference>
<dbReference type="PIRSF" id="PIRSF038126">
    <property type="entry name" value="SWI_SNF"/>
    <property type="match status" value="1"/>
</dbReference>
<feature type="chain" id="PRO_0000205948" description="SWI/SNF-related matrix-associated actin-dependent regulator of chromatin subfamily B member 1">
    <location>
        <begin position="1"/>
        <end position="385"/>
    </location>
</feature>
<feature type="repeat" description="1">
    <location>
        <begin position="186"/>
        <end position="245"/>
    </location>
</feature>
<feature type="repeat" description="2">
    <location>
        <begin position="259"/>
        <end position="319"/>
    </location>
</feature>
<feature type="region of interest" description="DNA-binding" evidence="23">
    <location>
        <begin position="1"/>
        <end position="113"/>
    </location>
</feature>
<feature type="region of interest" description="HIV-1 integrase-binding">
    <location>
        <begin position="183"/>
        <end position="243"/>
    </location>
</feature>
<feature type="region of interest" description="2 X approximate tandem repeats">
    <location>
        <begin position="186"/>
        <end position="319"/>
    </location>
</feature>
<feature type="region of interest" description="MYC-binding" evidence="3">
    <location>
        <begin position="186"/>
        <end position="245"/>
    </location>
</feature>
<feature type="region of interest" description="Interaction with PPP1R15A" evidence="7">
    <location>
        <begin position="304"/>
        <end position="318"/>
    </location>
</feature>
<feature type="modified residue" description="Phosphoserine" evidence="37">
    <location>
        <position position="129"/>
    </location>
</feature>
<feature type="cross-link" description="Glycyl lysine isopeptide (Lys-Gly) (interchain with G-Cter in SUMO2)" evidence="38">
    <location>
        <position position="106"/>
    </location>
</feature>
<feature type="cross-link" description="Glycyl lysine isopeptide (Lys-Gly) (interchain with G-Cter in SUMO2)" evidence="38">
    <location>
        <position position="108"/>
    </location>
</feature>
<feature type="cross-link" description="Glycyl lysine isopeptide (Lys-Gly) (interchain with G-Cter in SUMO2)" evidence="38">
    <location>
        <position position="124"/>
    </location>
</feature>
<feature type="cross-link" description="Glycyl lysine isopeptide (Lys-Gly) (interchain with G-Cter in SUMO2)" evidence="38">
    <location>
        <position position="161"/>
    </location>
</feature>
<feature type="splice variant" id="VSP_004399" description="In isoform B." evidence="29 30 31 34">
    <location>
        <begin position="69"/>
        <end position="77"/>
    </location>
</feature>
<feature type="sequence variant" id="VAR_080263" description="In CSS3; uncertain significance; dbSNP:rs398122368." evidence="20">
    <original>R</original>
    <variation>H</variation>
    <location>
        <position position="37"/>
    </location>
</feature>
<feature type="sequence variant" id="VAR_068178" description="In CSS3." evidence="19">
    <location>
        <position position="364"/>
    </location>
</feature>
<feature type="sequence variant" id="VAR_076934" description="In CSS3; dbSNP:rs886039520." evidence="21">
    <original>R</original>
    <variation>C</variation>
    <location>
        <position position="366"/>
    </location>
</feature>
<feature type="sequence variant" id="VAR_076935" description="In CSS3; dbSNP:rs1057517825." evidence="21">
    <original>R</original>
    <variation>Q</variation>
    <location>
        <position position="374"/>
    </location>
</feature>
<feature type="sequence variant" id="VAR_068179" description="In CSS3; dbSNP:rs387906812." evidence="19">
    <original>R</original>
    <variation>H</variation>
    <location>
        <position position="377"/>
    </location>
</feature>
<feature type="sequence conflict" description="In Ref. 1 and 2; CAA76639." evidence="35" ref="1 2">
    <original>P</original>
    <variation>S</variation>
    <location>
        <position position="136"/>
    </location>
</feature>
<feature type="sequence conflict" description="In Ref. 2; CAA76639." evidence="35" ref="2">
    <original>L</original>
    <variation>E</variation>
    <location>
        <position position="378"/>
    </location>
</feature>
<feature type="sequence conflict" description="In Ref. 1 and 2; CAA76639." evidence="35" ref="1 2">
    <original>A</original>
    <variation>G</variation>
    <location>
        <position position="382"/>
    </location>
</feature>
<feature type="strand" evidence="39">
    <location>
        <begin position="16"/>
        <end position="18"/>
    </location>
</feature>
<feature type="strand" evidence="44">
    <location>
        <begin position="26"/>
        <end position="28"/>
    </location>
</feature>
<feature type="helix" evidence="44">
    <location>
        <begin position="29"/>
        <end position="35"/>
    </location>
</feature>
<feature type="helix" evidence="44">
    <location>
        <begin position="42"/>
        <end position="46"/>
    </location>
</feature>
<feature type="strand" evidence="44">
    <location>
        <begin position="52"/>
        <end position="54"/>
    </location>
</feature>
<feature type="helix" evidence="44">
    <location>
        <begin position="57"/>
        <end position="65"/>
    </location>
</feature>
<feature type="strand" evidence="39">
    <location>
        <begin position="72"/>
        <end position="74"/>
    </location>
</feature>
<feature type="helix" evidence="44">
    <location>
        <begin position="81"/>
        <end position="83"/>
    </location>
</feature>
<feature type="strand" evidence="44">
    <location>
        <begin position="89"/>
        <end position="92"/>
    </location>
</feature>
<feature type="helix" evidence="44">
    <location>
        <begin position="93"/>
        <end position="97"/>
    </location>
</feature>
<feature type="turn" evidence="44">
    <location>
        <begin position="98"/>
        <end position="100"/>
    </location>
</feature>
<feature type="helix" evidence="39">
    <location>
        <begin position="105"/>
        <end position="108"/>
    </location>
</feature>
<feature type="helix" evidence="45">
    <location>
        <begin position="138"/>
        <end position="141"/>
    </location>
</feature>
<feature type="helix" evidence="45">
    <location>
        <begin position="160"/>
        <end position="162"/>
    </location>
</feature>
<feature type="helix" evidence="45">
    <location>
        <begin position="168"/>
        <end position="170"/>
    </location>
</feature>
<feature type="helix" evidence="43">
    <location>
        <begin position="172"/>
        <end position="180"/>
    </location>
</feature>
<feature type="strand" evidence="40">
    <location>
        <begin position="186"/>
        <end position="195"/>
    </location>
</feature>
<feature type="strand" evidence="40">
    <location>
        <begin position="198"/>
        <end position="207"/>
    </location>
</feature>
<feature type="strand" evidence="41">
    <location>
        <begin position="211"/>
        <end position="213"/>
    </location>
</feature>
<feature type="helix" evidence="40">
    <location>
        <begin position="215"/>
        <end position="226"/>
    </location>
</feature>
<feature type="helix" evidence="40">
    <location>
        <begin position="230"/>
        <end position="247"/>
    </location>
</feature>
<feature type="helix" evidence="43">
    <location>
        <begin position="248"/>
        <end position="250"/>
    </location>
</feature>
<feature type="strand" evidence="41">
    <location>
        <begin position="259"/>
        <end position="261"/>
    </location>
</feature>
<feature type="strand" evidence="42">
    <location>
        <begin position="263"/>
        <end position="270"/>
    </location>
</feature>
<feature type="strand" evidence="42">
    <location>
        <begin position="273"/>
        <end position="280"/>
    </location>
</feature>
<feature type="helix" evidence="42">
    <location>
        <begin position="290"/>
        <end position="301"/>
    </location>
</feature>
<feature type="helix" evidence="42">
    <location>
        <begin position="307"/>
        <end position="322"/>
    </location>
</feature>
<feature type="strand" evidence="45">
    <location>
        <begin position="326"/>
        <end position="328"/>
    </location>
</feature>
<feature type="strand" evidence="44">
    <location>
        <begin position="337"/>
        <end position="340"/>
    </location>
</feature>
<feature type="turn" evidence="42">
    <location>
        <begin position="343"/>
        <end position="349"/>
    </location>
</feature>
<feature type="strand" evidence="42">
    <location>
        <begin position="352"/>
        <end position="355"/>
    </location>
</feature>
<feature type="helix" evidence="45">
    <location>
        <begin position="358"/>
        <end position="380"/>
    </location>
</feature>
<accession>Q12824</accession>
<accession>O75784</accession>
<accession>O95474</accession>
<accession>Q17S11</accession>
<accession>Q38GA1</accession>
<accession>Q76N08</accession>
<accession>Q9UBH2</accession>
<protein>
    <recommendedName>
        <fullName>SWI/SNF-related matrix-associated actin-dependent regulator of chromatin subfamily B member 1</fullName>
    </recommendedName>
    <alternativeName>
        <fullName>BRG1-associated factor 47</fullName>
        <shortName>BAF47</shortName>
    </alternativeName>
    <alternativeName>
        <fullName>Integrase interactor 1 protein</fullName>
    </alternativeName>
    <alternativeName>
        <fullName>SNF5 homolog</fullName>
        <shortName>hSNF5</shortName>
    </alternativeName>
</protein>
<sequence>MMMMALSKTFGQKPVKFQLEDDGEFYMIGSEVGNYLRMFRGSLYKRYPSLWRRLATVEERKKIVASSHGKKTKPNTKDHGYTTLATSVTLLKASEVEEILDGNDEKYKAVSISTEPPTYLREQKAKRNSQWVPTLPNSSHHLDAVPCSTTINRNRMGRDKKRTFPLCFDDHDPAVIHENASQPEVLVPIRLDMEIDGQKLRDAFTWNMNEKLMTPEMFSEILCDDLDLNPLTFVPAIASAIRQQIESYPTDSILEDQSDQRVIIKLNIHVGNISLVDQFEWDMSEKENSPEKFALKLCSELGLGGEFVTTIAYSIRGQLSWHQKTYAFSENPLPTVEIAIRNTGDADQWCPLLETLTDAEMEKKIRDQDRNTRRMRRLANTAPAW</sequence>
<comment type="function">
    <text evidence="1 2 8 9 10 11 26">Core component of the BAF (hSWI/SNF) complex. This ATP-dependent chromatin-remodeling complex plays important roles in cell proliferation and differentiation, in cellular antiviral activities and inhibition of tumor formation. The BAF complex is able to create a stable, altered form of chromatin that constrains fewer negative supercoils than normal. This change in supercoiling would be due to the conversion of up to one-half of the nucleosomes on polynucleosomal arrays into asymmetric structures, termed altosomes, each composed of 2 histones octamers. Stimulates in vitro the remodeling activity of SMARCA4/BRG1/BAF190A. Involved in activation of CSF1 promoter. Belongs to the neural progenitors-specific chromatin remodeling complex (npBAF complex) and the neuron-specific chromatin remodeling complex (nBAF complex). During neural development a switch from a stem/progenitor to a postmitotic chromatin remodeling mechanism occurs as neurons exit the cell cycle and become committed to their adult state. The transition from proliferating neural stem/progenitor cells to postmitotic neurons requires a switch in subunit composition of the npBAF and nBAF complexes. As neural progenitors exit mitosis and differentiate into neurons, npBAF complexes which contain ACTL6A/BAF53A and PHF10/BAF45A, are exchanged for homologous alternative ACTL6B/BAF53B and DPF1/BAF45B or DPF3/BAF45C subunits in neuron-specific complexes (nBAF). The npBAF complex is essential for the self-renewal/proliferative capacity of the multipotent neural stem cells. The nBAF complex along with CREST plays a role regulating the activity of genes essential for dendrite growth (By similarity). Plays a key role in cell-cycle control and causes cell cycle arrest in G0/G1.</text>
</comment>
<comment type="subunit">
    <text evidence="1 4 6 7 12 15 16 17 18 22 25 32 33">Component of the multiprotein chromatin-remodeling complexes SWI/SNF: SWI/SNF-A (BAF), SWI/SNF-B (PBAF) and related complexes. The canonical complex contains a catalytic subunit (either SMARCA4/BRG1/BAF190A or SMARCA2/BRM/BAF190B) and at least SMARCE1, ACTL6A/BAF53, SMARCC1/BAF155, SMARCC2/BAF170, and SMARCB1/SNF5/BAF47. Other subunits specific to each of the complexes may also be present permitting several possible combinations developmentally and tissue specific (Probable). Component of the BAF complex, which includes at least actin (ACTB), ARID1A/BAF250A, ARID1B/BAF250B, SMARCA2/BRM, SMARCA4/BRG1/BAF190A, ACTL6A/BAF53, ACTL6B/BAF53B, SMARCE1/BAF57 SMARCC1/BAF155, SMARCC2/BAF170, SMARCB1/SNF5/INI1, and one or more SMARCD1/BAF60A, SMARCD2/BAF60B, or SMARCD3/BAF60C. In muscle cells, the BAF complex also contains DPF3 (PubMed:18765789, PubMed:8895581). Component of neural progenitors-specific chromatin remodeling complex (npBAF complex) composed of at least, ARID1A/BAF250A or ARID1B/BAF250B, SMARCD1/BAF60A, SMARCD3/BAF60C, SMARCA2/BRM/BAF190B, SMARCA4/BRG1/BAF190A, SMARCB1/BAF47, SMARCC1/BAF155, SMARCE1/BAF57, SMARCC2/BAF170, PHF10/BAF45A, ACTL6A/BAF53A and actin. Component of neuron-specific chromatin remodeling complex (nBAF complex) composed of at least, ARID1A/BAF250A or ARID1B/BAF250B, SMARCD1/BAF60A, SMARCD3/BAF60C, SMARCA2/BRM/BAF190B, SMARCA4/BRG1/BAF190A, SMARCB1/BAF47, SMARCC1/BAF155, SMARCE1/BAF57, SMARCC2/BAF170, DPF1/BAF45B, DPF3/BAF45C, ACTL6B/BAF53B and actin (By similarity). Component of the SWI/SNF-B (PBAF) chromatin remodeling complex, at least composed of SMARCA4/BRG1, SMARCB1/BAF47/SNF5, ACTL6A/BAF53A or ACTL6B/BAF53B, SMARCE1/BAF57, SMARCD1/BAF60A, SMARCD2/BAF60B, perhaps SMARCD3/BAF60C, SMARCC1/BAF155, SMARCC2/BAF170, PBRM1/BAF180, ARID2/BAF200 and actin (PubMed:26601204). Binds to double-stranded DNA. Interacts with CEBPB (when not methylated) (PubMed:20111005). Interacts with PIH1D1 (PubMed:22368283). Interacts with MYK and MAEL (PubMed:10319872). Interacts with PPP1R15A (PubMed:10490642, PubMed:12016208). Interacts with DPF2 (PubMed:20460684). Interacts with YWHAZ (PubMed:16959763). Interacts with ERCC6 (PubMed:24874740). Interacts with FOS, FOSB isoform 1 and 2, FOSL1 and FOSL2 (By similarity).</text>
</comment>
<comment type="subunit">
    <text evidence="5 24">(Microbial infection) Binds tightly to the human immunodeficiency virus-type 1 (HIV-1) integrase in vitro and stimulates its DNA-joining activity. Interacts with human papillomavirus 18 E1 protein to stimulate its viral replication (PubMed:10365963). Interacts with Epstein-Barr virus protein EBNA-2 (PubMed:8709224).</text>
</comment>
<comment type="interaction">
    <interactant intactId="EBI-358419">
        <id>Q12824</id>
    </interactant>
    <interactant intactId="EBI-637818">
        <id>Q68CP9</id>
        <label>ARID2</label>
    </interactant>
    <organismsDiffer>false</organismsDiffer>
    <experiments>14</experiments>
</comment>
<comment type="interaction">
    <interactant intactId="EBI-358419">
        <id>Q12824</id>
    </interactant>
    <interactant intactId="EBI-1049597">
        <id>P27797</id>
        <label>CALR</label>
    </interactant>
    <organismsDiffer>false</organismsDiffer>
    <experiments>5</experiments>
</comment>
<comment type="interaction">
    <interactant intactId="EBI-358419">
        <id>Q12824</id>
    </interactant>
    <interactant intactId="EBI-10976677">
        <id>G5E9A7</id>
        <label>DMWD</label>
    </interactant>
    <organismsDiffer>false</organismsDiffer>
    <experiments>3</experiments>
</comment>
<comment type="interaction">
    <interactant intactId="EBI-358419">
        <id>Q12824</id>
    </interactant>
    <interactant intactId="EBI-10968534">
        <id>P50570-2</id>
        <label>DNM2</label>
    </interactant>
    <organismsDiffer>false</organismsDiffer>
    <experiments>3</experiments>
</comment>
<comment type="interaction">
    <interactant intactId="EBI-358419">
        <id>Q12824</id>
    </interactant>
    <interactant intactId="EBI-348399">
        <id>P22607</id>
        <label>FGFR3</label>
    </interactant>
    <organismsDiffer>false</organismsDiffer>
    <experiments>3</experiments>
</comment>
<comment type="interaction">
    <interactant intactId="EBI-358419">
        <id>Q12824</id>
    </interactant>
    <interactant intactId="EBI-744302">
        <id>P14136</id>
        <label>GFAP</label>
    </interactant>
    <organismsDiffer>false</organismsDiffer>
    <experiments>4</experiments>
</comment>
<comment type="interaction">
    <interactant intactId="EBI-358419">
        <id>Q12824</id>
    </interactant>
    <interactant intactId="EBI-1955541">
        <id>Q53GS7</id>
        <label>GLE1</label>
    </interactant>
    <organismsDiffer>false</organismsDiffer>
    <experiments>3</experiments>
</comment>
<comment type="interaction">
    <interactant intactId="EBI-358419">
        <id>Q12824</id>
    </interactant>
    <interactant intactId="EBI-351506">
        <id>P06396</id>
        <label>GSN</label>
    </interactant>
    <organismsDiffer>false</organismsDiffer>
    <experiments>3</experiments>
</comment>
<comment type="interaction">
    <interactant intactId="EBI-358419">
        <id>Q12824</id>
    </interactant>
    <interactant intactId="EBI-353620">
        <id>Q6FI13</id>
        <label>H2AC19</label>
    </interactant>
    <organismsDiffer>false</organismsDiffer>
    <experiments>5</experiments>
</comment>
<comment type="interaction">
    <interactant intactId="EBI-358419">
        <id>Q12824</id>
    </interactant>
    <interactant intactId="EBI-4409738">
        <id>O60814</id>
        <label>H2BC12</label>
    </interactant>
    <organismsDiffer>false</organismsDiffer>
    <experiments>5</experiments>
</comment>
<comment type="interaction">
    <interactant intactId="EBI-358419">
        <id>Q12824</id>
    </interactant>
    <interactant intactId="EBI-79722">
        <id>P68431</id>
        <label>H3C12</label>
    </interactant>
    <organismsDiffer>false</organismsDiffer>
    <experiments>5</experiments>
</comment>
<comment type="interaction">
    <interactant intactId="EBI-358419">
        <id>Q12824</id>
    </interactant>
    <interactant intactId="EBI-302023">
        <id>P62805</id>
        <label>H4C9</label>
    </interactant>
    <organismsDiffer>false</organismsDiffer>
    <experiments>2</experiments>
</comment>
<comment type="interaction">
    <interactant intactId="EBI-358419">
        <id>Q12824</id>
    </interactant>
    <interactant intactId="EBI-350145">
        <id>P01112</id>
        <label>HRAS</label>
    </interactant>
    <organismsDiffer>false</organismsDiffer>
    <experiments>3</experiments>
</comment>
<comment type="interaction">
    <interactant intactId="EBI-358419">
        <id>Q12824</id>
    </interactant>
    <interactant intactId="EBI-466029">
        <id>P42858</id>
        <label>HTT</label>
    </interactant>
    <organismsDiffer>false</organismsDiffer>
    <experiments>9</experiments>
</comment>
<comment type="interaction">
    <interactant intactId="EBI-358419">
        <id>Q12824</id>
    </interactant>
    <interactant intactId="EBI-1055254">
        <id>Q8WXH2</id>
        <label>JPH3</label>
    </interactant>
    <organismsDiffer>false</organismsDiffer>
    <experiments>3</experiments>
</comment>
<comment type="interaction">
    <interactant intactId="EBI-358419">
        <id>Q12824</id>
    </interactant>
    <interactant intactId="EBI-1189067">
        <id>P51608</id>
        <label>MECP2</label>
    </interactant>
    <organismsDiffer>false</organismsDiffer>
    <experiments>3</experiments>
</comment>
<comment type="interaction">
    <interactant intactId="EBI-358419">
        <id>Q12824</id>
    </interactant>
    <interactant intactId="EBI-713665">
        <id>P19404</id>
        <label>NDUFV2</label>
    </interactant>
    <organismsDiffer>false</organismsDiffer>
    <experiments>3</experiments>
</comment>
<comment type="interaction">
    <interactant intactId="EBI-358419">
        <id>Q12824</id>
    </interactant>
    <interactant intactId="EBI-716404">
        <id>P16284</id>
        <label>PECAM1</label>
    </interactant>
    <organismsDiffer>false</organismsDiffer>
    <experiments>3</experiments>
</comment>
<comment type="interaction">
    <interactant intactId="EBI-358419">
        <id>Q12824</id>
    </interactant>
    <interactant intactId="EBI-302489">
        <id>P51532</id>
        <label>SMARCA4</label>
    </interactant>
    <organismsDiffer>false</organismsDiffer>
    <experiments>39</experiments>
</comment>
<comment type="interaction">
    <interactant intactId="EBI-358419">
        <id>Q12824</id>
    </interactant>
    <interactant intactId="EBI-358419">
        <id>Q12824</id>
        <label>SMARCB1</label>
    </interactant>
    <organismsDiffer>false</organismsDiffer>
    <experiments>5</experiments>
</comment>
<comment type="interaction">
    <interactant intactId="EBI-358419">
        <id>Q12824</id>
    </interactant>
    <interactant intactId="EBI-395421">
        <id>Q16637</id>
        <label>SMN2</label>
    </interactant>
    <organismsDiffer>false</organismsDiffer>
    <experiments>3</experiments>
</comment>
<comment type="interaction">
    <interactant intactId="EBI-358419">
        <id>Q12824</id>
    </interactant>
    <interactant intactId="EBI-5235340">
        <id>Q7Z699</id>
        <label>SPRED1</label>
    </interactant>
    <organismsDiffer>false</organismsDiffer>
    <experiments>3</experiments>
</comment>
<comment type="interaction">
    <interactant intactId="EBI-358419">
        <id>Q12824</id>
    </interactant>
    <interactant intactId="EBI-25847109">
        <id>O14656-2</id>
        <label>TOR1A</label>
    </interactant>
    <organismsDiffer>false</organismsDiffer>
    <experiments>3</experiments>
</comment>
<comment type="interaction">
    <interactant intactId="EBI-358419">
        <id>Q12824</id>
    </interactant>
    <interactant intactId="EBI-353844">
        <id>P08670</id>
        <label>VIM</label>
    </interactant>
    <organismsDiffer>false</organismsDiffer>
    <experiments>4</experiments>
</comment>
<comment type="interaction">
    <interactant intactId="EBI-358419">
        <id>Q12824</id>
    </interactant>
    <interactant intactId="EBI-25900580">
        <id>Q9Y649</id>
    </interactant>
    <organismsDiffer>false</organismsDiffer>
    <experiments>3</experiments>
</comment>
<comment type="interaction">
    <interactant intactId="EBI-358419">
        <id>Q12824</id>
    </interactant>
    <interactant intactId="EBI-9872653">
        <id>PRO_0000042447</id>
        <label>gag-pol</label>
        <dbReference type="UniProtKB" id="P04585"/>
    </interactant>
    <organismsDiffer>true</organismsDiffer>
    <experiments>3</experiments>
</comment>
<comment type="interaction">
    <interactant intactId="EBI-358419">
        <id>Q12824</id>
    </interactant>
    <interactant intactId="EBI-689301">
        <id>Q8K1P7</id>
        <label>Smarca4</label>
    </interactant>
    <organismsDiffer>true</organismsDiffer>
    <experiments>2</experiments>
</comment>
<comment type="interaction">
    <interactant intactId="EBI-358419">
        <id>Q12824</id>
    </interactant>
    <interactant intactId="EBI-7333987">
        <id>P04326</id>
        <label>tat</label>
    </interactant>
    <organismsDiffer>true</organismsDiffer>
    <experiments>3</experiments>
</comment>
<comment type="interaction">
    <interactant intactId="EBI-7015645">
        <id>Q12824-1</id>
    </interactant>
    <interactant intactId="EBI-7015660">
        <id>P06789</id>
        <label>E1</label>
    </interactant>
    <organismsDiffer>true</organismsDiffer>
    <experiments>5</experiments>
</comment>
<comment type="interaction">
    <interactant intactId="EBI-358436">
        <id>Q12824-2</id>
    </interactant>
    <interactant intactId="EBI-10968534">
        <id>P50570-2</id>
        <label>DNM2</label>
    </interactant>
    <organismsDiffer>false</organismsDiffer>
    <experiments>3</experiments>
</comment>
<comment type="interaction">
    <interactant intactId="EBI-358436">
        <id>Q12824-2</id>
    </interactant>
    <interactant intactId="EBI-6658203">
        <id>Q86YD7</id>
        <label>FAM90A1</label>
    </interactant>
    <organismsDiffer>false</organismsDiffer>
    <experiments>3</experiments>
</comment>
<comment type="interaction">
    <interactant intactId="EBI-358436">
        <id>Q12824-2</id>
    </interactant>
    <interactant intactId="EBI-10175124">
        <id>Q8IZU0</id>
        <label>FAM9B</label>
    </interactant>
    <organismsDiffer>false</organismsDiffer>
    <experiments>3</experiments>
</comment>
<comment type="interaction">
    <interactant intactId="EBI-358436">
        <id>Q12824-2</id>
    </interactant>
    <interactant intactId="EBI-740220">
        <id>O14964</id>
        <label>HGS</label>
    </interactant>
    <organismsDiffer>false</organismsDiffer>
    <experiments>3</experiments>
</comment>
<comment type="interaction">
    <interactant intactId="EBI-358436">
        <id>Q12824-2</id>
    </interactant>
    <interactant intactId="EBI-7116203">
        <id>O75031</id>
        <label>HSF2BP</label>
    </interactant>
    <organismsDiffer>false</organismsDiffer>
    <experiments>3</experiments>
</comment>
<comment type="interaction">
    <interactant intactId="EBI-358436">
        <id>Q12824-2</id>
    </interactant>
    <interactant intactId="EBI-17178971">
        <id>Q14005-2</id>
        <label>IL16</label>
    </interactant>
    <organismsDiffer>false</organismsDiffer>
    <experiments>3</experiments>
</comment>
<comment type="interaction">
    <interactant intactId="EBI-358436">
        <id>Q12824-2</id>
    </interactant>
    <interactant intactId="EBI-6165891">
        <id>Q14696</id>
        <label>MESD</label>
    </interactant>
    <organismsDiffer>false</organismsDiffer>
    <experiments>3</experiments>
</comment>
<comment type="interaction">
    <interactant intactId="EBI-358436">
        <id>Q12824-2</id>
    </interactant>
    <interactant intactId="EBI-2513715">
        <id>Q96EL3</id>
        <label>MRPL53</label>
    </interactant>
    <organismsDiffer>false</organismsDiffer>
    <experiments>3</experiments>
</comment>
<comment type="interaction">
    <interactant intactId="EBI-358436">
        <id>Q12824-2</id>
    </interactant>
    <interactant intactId="EBI-79165">
        <id>Q9NRD5</id>
        <label>PICK1</label>
    </interactant>
    <organismsDiffer>false</organismsDiffer>
    <experiments>3</experiments>
</comment>
<comment type="interaction">
    <interactant intactId="EBI-358436">
        <id>Q12824-2</id>
    </interactant>
    <interactant intactId="EBI-1053424">
        <id>O43741</id>
        <label>PRKAB2</label>
    </interactant>
    <organismsDiffer>false</organismsDiffer>
    <experiments>3</experiments>
</comment>
<comment type="interaction">
    <interactant intactId="EBI-358436">
        <id>Q12824-2</id>
    </interactant>
    <interactant intactId="EBI-372273">
        <id>P20618</id>
        <label>PSMB1</label>
    </interactant>
    <organismsDiffer>false</organismsDiffer>
    <experiments>3</experiments>
</comment>
<comment type="interaction">
    <interactant intactId="EBI-358436">
        <id>Q12824-2</id>
    </interactant>
    <interactant intactId="EBI-6257312">
        <id>Q9BVN2</id>
        <label>RUSC1</label>
    </interactant>
    <organismsDiffer>false</organismsDiffer>
    <experiments>3</experiments>
</comment>
<comment type="interaction">
    <interactant intactId="EBI-358436">
        <id>Q12824-2</id>
    </interactant>
    <interactant intactId="EBI-11990400">
        <id>Q8TAQ2-2</id>
        <label>SMARCC2</label>
    </interactant>
    <organismsDiffer>false</organismsDiffer>
    <experiments>4</experiments>
</comment>
<comment type="interaction">
    <interactant intactId="EBI-358436">
        <id>Q12824-2</id>
    </interactant>
    <interactant intactId="EBI-358489">
        <id>Q96GM5</id>
        <label>SMARCD1</label>
    </interactant>
    <organismsDiffer>false</organismsDiffer>
    <experiments>3</experiments>
</comment>
<comment type="interaction">
    <interactant intactId="EBI-358436">
        <id>Q12824-2</id>
    </interactant>
    <interactant intactId="EBI-11741437">
        <id>Q08117-2</id>
        <label>TLE5</label>
    </interactant>
    <organismsDiffer>false</organismsDiffer>
    <experiments>3</experiments>
</comment>
<comment type="interaction">
    <interactant intactId="EBI-358436">
        <id>Q12824-2</id>
    </interactant>
    <interactant intactId="EBI-17716262">
        <id>Q9UPQ4-2</id>
        <label>TRIM35</label>
    </interactant>
    <organismsDiffer>false</organismsDiffer>
    <experiments>3</experiments>
</comment>
<comment type="interaction">
    <interactant intactId="EBI-358436">
        <id>Q12824-2</id>
    </interactant>
    <interactant intactId="EBI-4395732">
        <id>P0C7X2</id>
        <label>ZNF688</label>
    </interactant>
    <organismsDiffer>false</organismsDiffer>
    <experiments>3</experiments>
</comment>
<comment type="subcellular location">
    <subcellularLocation>
        <location>Nucleus</location>
    </subcellularLocation>
</comment>
<comment type="alternative products">
    <event type="alternative splicing"/>
    <isoform>
        <id>Q12824-1</id>
        <name>A</name>
        <name>INI1A</name>
        <sequence type="displayed"/>
    </isoform>
    <isoform>
        <id>Q12824-2</id>
        <name>B</name>
        <name>INI1B</name>
        <sequence type="described" ref="VSP_004399"/>
    </isoform>
</comment>
<comment type="domain">
    <text evidence="36">The N-terminal DNA-binding region is structurally similar to winged helix domains.</text>
</comment>
<comment type="disease" evidence="27 28">
    <disease id="DI-02266">
        <name>Rhabdoid tumor predisposition syndrome 1</name>
        <acronym>RTPS1</acronym>
        <description>A familial cancer syndrome predisposing to renal or extrarenal malignant rhabdoid tumors and to a variety of tumors of the central nervous system, including choroid plexus carcinoma, medulloblastoma, and central primitive neuroectodermal tumors. Rhabdoid tumors are the most aggressive and lethal malignancies occurring in early childhood.</description>
        <dbReference type="MIM" id="609322"/>
    </disease>
    <text>The disease is caused by variants affecting the gene represented in this entry.</text>
</comment>
<comment type="disease" evidence="13 14">
    <disease id="DI-02287">
        <name>Schwannomatosis 1</name>
        <acronym>SWN1</acronym>
        <description>An autosomal dominant tumor predisposition syndrome characterized by the development of multiple benign nerve sheath tumors called schwannomas on cranial, spinal, and peripheral nerves, without involvement of the vestibular nerve. Affected individuals may also have multiple meningiomas.</description>
        <dbReference type="MIM" id="162091"/>
    </disease>
    <text>Disease susceptibility is associated with variants affecting the gene represented in this entry.</text>
</comment>
<comment type="disease" evidence="19 20 21">
    <disease id="DI-03454">
        <name>Coffin-Siris syndrome 3</name>
        <acronym>CSS3</acronym>
        <description>A form of Coffin-Siris syndrome, a congenital multiple malformation syndrome with broad phenotypic and genetic variability. Cardinal features are intellectual disability, coarse facial features, hypertrichosis, and hypoplastic or absent fifth digit nails or phalanges. Additional features include malformations of the cardiac, gastrointestinal, genitourinary, and/or central nervous systems. Sucking/feeding difficulties, poor growth, ophthalmologic abnormalities, hearing impairment, and spinal anomalies are common findings. Both autosomal dominant and autosomal recessive inheritance patterns have been reported.</description>
        <dbReference type="MIM" id="614608"/>
    </disease>
    <text>The disease is caused by variants affecting the gene represented in this entry.</text>
</comment>
<comment type="similarity">
    <text evidence="35">Belongs to the SNF5 family.</text>
</comment>
<comment type="online information" name="Atlas of Genetics and Cytogenetics in Oncology and Haematology">
    <link uri="https://atlasgeneticsoncology.org/gene/169/SMARCB1"/>
</comment>
<reference key="1">
    <citation type="journal article" date="1994" name="Science">
        <title>Binding and stimulation of HIV-1 integrase by a human homolog of yeast transcription factor SNF5.</title>
        <authorList>
            <person name="Kalpana G.V."/>
            <person name="Marmon S."/>
            <person name="Wang W."/>
            <person name="Crabtree G.R."/>
            <person name="Goff S.P."/>
        </authorList>
    </citation>
    <scope>NUCLEOTIDE SEQUENCE [MRNA] (ISOFORM A)</scope>
</reference>
<reference key="2">
    <citation type="journal article" date="1998" name="Nature">
        <title>Truncating mutations of hSNF5/INI1 in aggressive paediatric cancer.</title>
        <authorList>
            <person name="Versteege I."/>
            <person name="Sevenet N."/>
            <person name="Lange J."/>
            <person name="Rousseau-Merck M.-F."/>
            <person name="Ambros P."/>
            <person name="Handgretinger R."/>
            <person name="Aurias A."/>
            <person name="Delattre O."/>
        </authorList>
    </citation>
    <scope>NUCLEOTIDE SEQUENCE [GENOMIC DNA]</scope>
    <scope>INVOLVEMENT IN RTPS1</scope>
</reference>
<reference key="3">
    <citation type="journal article" date="1999" name="Biochem. Biophys. Res. Commun.">
        <title>The mouse ortholog of the human SMARCB1 gene encodes two splice forms.</title>
        <authorList>
            <person name="Bruder C.E."/>
            <person name="Dumanski J.P."/>
            <person name="Kedra D."/>
        </authorList>
    </citation>
    <scope>NUCLEOTIDE SEQUENCE [MRNA] (ISOFORMS A AND B)</scope>
</reference>
<reference key="4">
    <citation type="submission" date="1998-09" db="EMBL/GenBank/DDBJ databases">
        <title>Human Ini1 27bp deletion form.</title>
        <authorList>
            <person name="Tozaki H."/>
            <person name="Yasuda J."/>
            <person name="Iwakura Y."/>
        </authorList>
    </citation>
    <scope>NUCLEOTIDE SEQUENCE [MRNA] (ISOFORM B)</scope>
</reference>
<reference key="5">
    <citation type="journal article" date="2004" name="Genome Biol.">
        <title>A genome annotation-driven approach to cloning the human ORFeome.</title>
        <authorList>
            <person name="Collins J.E."/>
            <person name="Wright C.L."/>
            <person name="Edwards C.A."/>
            <person name="Davis M.P."/>
            <person name="Grinham J.A."/>
            <person name="Cole C.G."/>
            <person name="Goward M.E."/>
            <person name="Aguado B."/>
            <person name="Mallya M."/>
            <person name="Mokrab Y."/>
            <person name="Huckle E.J."/>
            <person name="Beare D.M."/>
            <person name="Dunham I."/>
        </authorList>
    </citation>
    <scope>NUCLEOTIDE SEQUENCE [LARGE SCALE MRNA] (ISOFORM A)</scope>
</reference>
<reference key="6">
    <citation type="journal article" date="2004" name="Nat. Genet.">
        <title>Complete sequencing and characterization of 21,243 full-length human cDNAs.</title>
        <authorList>
            <person name="Ota T."/>
            <person name="Suzuki Y."/>
            <person name="Nishikawa T."/>
            <person name="Otsuki T."/>
            <person name="Sugiyama T."/>
            <person name="Irie R."/>
            <person name="Wakamatsu A."/>
            <person name="Hayashi K."/>
            <person name="Sato H."/>
            <person name="Nagai K."/>
            <person name="Kimura K."/>
            <person name="Makita H."/>
            <person name="Sekine M."/>
            <person name="Obayashi M."/>
            <person name="Nishi T."/>
            <person name="Shibahara T."/>
            <person name="Tanaka T."/>
            <person name="Ishii S."/>
            <person name="Yamamoto J."/>
            <person name="Saito K."/>
            <person name="Kawai Y."/>
            <person name="Isono Y."/>
            <person name="Nakamura Y."/>
            <person name="Nagahari K."/>
            <person name="Murakami K."/>
            <person name="Yasuda T."/>
            <person name="Iwayanagi T."/>
            <person name="Wagatsuma M."/>
            <person name="Shiratori A."/>
            <person name="Sudo H."/>
            <person name="Hosoiri T."/>
            <person name="Kaku Y."/>
            <person name="Kodaira H."/>
            <person name="Kondo H."/>
            <person name="Sugawara M."/>
            <person name="Takahashi M."/>
            <person name="Kanda K."/>
            <person name="Yokoi T."/>
            <person name="Furuya T."/>
            <person name="Kikkawa E."/>
            <person name="Omura Y."/>
            <person name="Abe K."/>
            <person name="Kamihara K."/>
            <person name="Katsuta N."/>
            <person name="Sato K."/>
            <person name="Tanikawa M."/>
            <person name="Yamazaki M."/>
            <person name="Ninomiya K."/>
            <person name="Ishibashi T."/>
            <person name="Yamashita H."/>
            <person name="Murakawa K."/>
            <person name="Fujimori K."/>
            <person name="Tanai H."/>
            <person name="Kimata M."/>
            <person name="Watanabe M."/>
            <person name="Hiraoka S."/>
            <person name="Chiba Y."/>
            <person name="Ishida S."/>
            <person name="Ono Y."/>
            <person name="Takiguchi S."/>
            <person name="Watanabe S."/>
            <person name="Yosida M."/>
            <person name="Hotuta T."/>
            <person name="Kusano J."/>
            <person name="Kanehori K."/>
            <person name="Takahashi-Fujii A."/>
            <person name="Hara H."/>
            <person name="Tanase T.-O."/>
            <person name="Nomura Y."/>
            <person name="Togiya S."/>
            <person name="Komai F."/>
            <person name="Hara R."/>
            <person name="Takeuchi K."/>
            <person name="Arita M."/>
            <person name="Imose N."/>
            <person name="Musashino K."/>
            <person name="Yuuki H."/>
            <person name="Oshima A."/>
            <person name="Sasaki N."/>
            <person name="Aotsuka S."/>
            <person name="Yoshikawa Y."/>
            <person name="Matsunawa H."/>
            <person name="Ichihara T."/>
            <person name="Shiohata N."/>
            <person name="Sano S."/>
            <person name="Moriya S."/>
            <person name="Momiyama H."/>
            <person name="Satoh N."/>
            <person name="Takami S."/>
            <person name="Terashima Y."/>
            <person name="Suzuki O."/>
            <person name="Nakagawa S."/>
            <person name="Senoh A."/>
            <person name="Mizoguchi H."/>
            <person name="Goto Y."/>
            <person name="Shimizu F."/>
            <person name="Wakebe H."/>
            <person name="Hishigaki H."/>
            <person name="Watanabe T."/>
            <person name="Sugiyama A."/>
            <person name="Takemoto M."/>
            <person name="Kawakami B."/>
            <person name="Yamazaki M."/>
            <person name="Watanabe K."/>
            <person name="Kumagai A."/>
            <person name="Itakura S."/>
            <person name="Fukuzumi Y."/>
            <person name="Fujimori Y."/>
            <person name="Komiyama M."/>
            <person name="Tashiro H."/>
            <person name="Tanigami A."/>
            <person name="Fujiwara T."/>
            <person name="Ono T."/>
            <person name="Yamada K."/>
            <person name="Fujii Y."/>
            <person name="Ozaki K."/>
            <person name="Hirao M."/>
            <person name="Ohmori Y."/>
            <person name="Kawabata A."/>
            <person name="Hikiji T."/>
            <person name="Kobatake N."/>
            <person name="Inagaki H."/>
            <person name="Ikema Y."/>
            <person name="Okamoto S."/>
            <person name="Okitani R."/>
            <person name="Kawakami T."/>
            <person name="Noguchi S."/>
            <person name="Itoh T."/>
            <person name="Shigeta K."/>
            <person name="Senba T."/>
            <person name="Matsumura K."/>
            <person name="Nakajima Y."/>
            <person name="Mizuno T."/>
            <person name="Morinaga M."/>
            <person name="Sasaki M."/>
            <person name="Togashi T."/>
            <person name="Oyama M."/>
            <person name="Hata H."/>
            <person name="Watanabe M."/>
            <person name="Komatsu T."/>
            <person name="Mizushima-Sugano J."/>
            <person name="Satoh T."/>
            <person name="Shirai Y."/>
            <person name="Takahashi Y."/>
            <person name="Nakagawa K."/>
            <person name="Okumura K."/>
            <person name="Nagase T."/>
            <person name="Nomura N."/>
            <person name="Kikuchi H."/>
            <person name="Masuho Y."/>
            <person name="Yamashita R."/>
            <person name="Nakai K."/>
            <person name="Yada T."/>
            <person name="Nakamura Y."/>
            <person name="Ohara O."/>
            <person name="Isogai T."/>
            <person name="Sugano S."/>
        </authorList>
    </citation>
    <scope>NUCLEOTIDE SEQUENCE [LARGE SCALE MRNA] (ISOFORM B)</scope>
    <source>
        <tissue>Embryo</tissue>
    </source>
</reference>
<reference key="7">
    <citation type="submission" date="2005-10" db="EMBL/GenBank/DDBJ databases">
        <authorList>
            <consortium name="NIEHS SNPs program"/>
        </authorList>
    </citation>
    <scope>NUCLEOTIDE SEQUENCE [GENOMIC DNA]</scope>
</reference>
<reference key="8">
    <citation type="submission" date="2005-07" db="EMBL/GenBank/DDBJ databases">
        <authorList>
            <person name="Mural R.J."/>
            <person name="Istrail S."/>
            <person name="Sutton G."/>
            <person name="Florea L."/>
            <person name="Halpern A.L."/>
            <person name="Mobarry C.M."/>
            <person name="Lippert R."/>
            <person name="Walenz B."/>
            <person name="Shatkay H."/>
            <person name="Dew I."/>
            <person name="Miller J.R."/>
            <person name="Flanigan M.J."/>
            <person name="Edwards N.J."/>
            <person name="Bolanos R."/>
            <person name="Fasulo D."/>
            <person name="Halldorsson B.V."/>
            <person name="Hannenhalli S."/>
            <person name="Turner R."/>
            <person name="Yooseph S."/>
            <person name="Lu F."/>
            <person name="Nusskern D.R."/>
            <person name="Shue B.C."/>
            <person name="Zheng X.H."/>
            <person name="Zhong F."/>
            <person name="Delcher A.L."/>
            <person name="Huson D.H."/>
            <person name="Kravitz S.A."/>
            <person name="Mouchard L."/>
            <person name="Reinert K."/>
            <person name="Remington K.A."/>
            <person name="Clark A.G."/>
            <person name="Waterman M.S."/>
            <person name="Eichler E.E."/>
            <person name="Adams M.D."/>
            <person name="Hunkapiller M.W."/>
            <person name="Myers E.W."/>
            <person name="Venter J.C."/>
        </authorList>
    </citation>
    <scope>NUCLEOTIDE SEQUENCE [LARGE SCALE GENOMIC DNA]</scope>
</reference>
<reference key="9">
    <citation type="journal article" date="2004" name="Genome Res.">
        <title>The status, quality, and expansion of the NIH full-length cDNA project: the Mammalian Gene Collection (MGC).</title>
        <authorList>
            <consortium name="The MGC Project Team"/>
        </authorList>
    </citation>
    <scope>NUCLEOTIDE SEQUENCE [LARGE SCALE MRNA] (ISOFORM B)</scope>
    <source>
        <tissue>Brain</tissue>
    </source>
</reference>
<reference key="10">
    <citation type="journal article" date="1996" name="EMBO J.">
        <title>Purification and biochemical heterogeneity of the mammalian SWI-SNF complex.</title>
        <authorList>
            <person name="Wang W."/>
            <person name="Cote J."/>
            <person name="Xue Y."/>
            <person name="Zhou S."/>
            <person name="Khavari P.A."/>
            <person name="Biggar S.R."/>
            <person name="Muchardt C."/>
            <person name="Kalpana G.V."/>
            <person name="Goff S.P."/>
            <person name="Yaniv M."/>
            <person name="Workman J.L."/>
            <person name="Crabtree G.R."/>
        </authorList>
    </citation>
    <scope>IDENTIFICATION IN BAF COMPLEX</scope>
</reference>
<reference key="11">
    <citation type="journal article" date="1996" name="J. Virol.">
        <title>Epstein-Barr virus nuclear protein 2 (EBNA2) binds to a component of the human SNF-SWI complex, hSNF5/Ini1.</title>
        <authorList>
            <person name="Wu D.Y."/>
            <person name="Kalpana G.V."/>
            <person name="Goff S.P."/>
            <person name="Schubach W.H."/>
        </authorList>
    </citation>
    <scope>INTERACTION WITH EPSTEIN-BARR VIRUS EBNA2 (MICROBIAL INFECTION)</scope>
</reference>
<reference key="12">
    <citation type="journal article" date="1998" name="Proc. Natl. Acad. Sci. U.S.A.">
        <title>Structure-function analysis of integrase interactor 1/hSNF5L1 reveals differential properties of two repeat motifs present in the highly conserved region.</title>
        <authorList>
            <person name="Morozov A."/>
            <person name="Yung E."/>
            <person name="Kalpana G.V."/>
        </authorList>
    </citation>
    <scope>FUNCTION</scope>
</reference>
<reference key="13">
    <citation type="journal article" date="1999" name="Mol. Cell. Biol.">
        <title>Leukemic HRX fusion proteins inhibit GADD34-induced apoptosis and associate with the GADD34 and hSNF5/INI1 proteins.</title>
        <authorList>
            <person name="Adler H.T."/>
            <person name="Chinery R."/>
            <person name="Wu D.Y."/>
            <person name="Kussick S.J."/>
            <person name="Payne J.M."/>
            <person name="Fornace A.J. Jr."/>
            <person name="Tkachuk D.C."/>
        </authorList>
    </citation>
    <scope>INTERACTION WITH PPP1R15A</scope>
</reference>
<reference key="14">
    <citation type="journal article" date="1999" name="Nat. Genet.">
        <title>c-MYC interacts with INI1/hSNF5 and requires the SWI/SNF complex for transactivation function.</title>
        <authorList>
            <person name="Cheng S.-W."/>
            <person name="Davies K.P."/>
            <person name="Yung E."/>
            <person name="Beltran R.J."/>
            <person name="Yu J."/>
            <person name="Kalpana G.V."/>
        </authorList>
    </citation>
    <scope>INTERACTION WITH MYC</scope>
</reference>
<reference key="15">
    <citation type="journal article" date="1999" name="Nature">
        <title>Interaction of E1 and hSNF5 proteins stimulates replication of human papillomavirus DNA.</title>
        <authorList>
            <person name="Lee D."/>
            <person name="Sohn H."/>
            <person name="Kalpana G.V."/>
            <person name="Choe J."/>
        </authorList>
    </citation>
    <scope>INTERACTION WITH HUMAN PAPILLOMAVIRUS 18 PROTEIN E1 (MICROBIAL INFECTION)</scope>
</reference>
<reference key="16">
    <citation type="journal article" date="1999" name="Mol. Cell">
        <title>Reconstitution of a core chromatin remodeling complex from SWI/SNF subunits.</title>
        <authorList>
            <person name="Phelan M.L."/>
            <person name="Sif S."/>
            <person name="Narlikar G.J."/>
            <person name="Kingston R.E."/>
        </authorList>
    </citation>
    <scope>FUNCTION</scope>
</reference>
<reference key="17">
    <citation type="journal article" date="1999" name="Cancer Res.">
        <title>Germ-line and acquired mutations of INI1 in atypical teratoid and rhabdoid tumors.</title>
        <authorList>
            <person name="Biegel J.A."/>
            <person name="Zhou J.-Y."/>
            <person name="Rorke L.B."/>
            <person name="Stenstrom C."/>
            <person name="Wainwright L.M."/>
            <person name="Fogelgren B."/>
        </authorList>
    </citation>
    <scope>INVOLVEMENT IN RTPS1</scope>
</reference>
<reference key="18">
    <citation type="journal article" date="2002" name="J. Biol. Chem.">
        <title>The human SNF5/INI1 protein facilitates the function of the growth arrest and DNA damage-inducible protein (GADD34) and modulates GADD34-bound protein phosphatase-1 activity.</title>
        <authorList>
            <person name="Wu D.Y."/>
            <person name="Tkachuck D.C."/>
            <person name="Roberson R.S."/>
            <person name="Schubach W.H."/>
        </authorList>
    </citation>
    <scope>INTERACTION WITH PPP1R15A</scope>
</reference>
<reference key="19">
    <citation type="journal article" date="2002" name="Oncogene">
        <title>A key role of the hSNF5/INI1 tumour suppressor in the control of the G1-S transition of the cell cycle.</title>
        <authorList>
            <person name="Versteege I."/>
            <person name="Medjkane S."/>
            <person name="Rouillard D."/>
            <person name="Delattre O."/>
        </authorList>
    </citation>
    <scope>FUNCTION IN CELL CYCLE</scope>
</reference>
<reference key="20">
    <citation type="journal article" date="2004" name="J. Biol. Chem.">
        <title>P16INK4a is required for hSNF5 chromatin remodeler-induced cellular senescence in malignant rhabdoid tumor cells.</title>
        <authorList>
            <person name="Oruetxebarria I."/>
            <person name="Venturini F."/>
            <person name="Kekarainen T."/>
            <person name="Houweling A."/>
            <person name="Zuijderduijn L.M.P."/>
            <person name="Mohd-Sarip A."/>
            <person name="Vries R.G.J."/>
            <person name="Hoeben R.C."/>
            <person name="Verrijzer C.P."/>
        </authorList>
    </citation>
    <scope>FUNCTION IN CELL CYCLE</scope>
</reference>
<reference key="21">
    <citation type="journal article" date="2005" name="Mol. Cells">
        <title>Chromatin-remodeling factor INI1/hSNF5/BAF47 is involved in activation of the colony stimulating factor 1 promoter.</title>
        <authorList>
            <person name="Pan X."/>
            <person name="Song Z."/>
            <person name="Zhai L."/>
            <person name="Li X."/>
            <person name="Zeng X."/>
        </authorList>
    </citation>
    <scope>FUNCTION IN ACTIVATION OF COLONY STIMULATING FACTOR 1 PROMOTER</scope>
</reference>
<reference key="22">
    <citation type="journal article" date="2005" name="Cancer Res.">
        <title>SMARCB1/INI1 tumor suppressor gene is frequently inactivated in epithelioid sarcomas.</title>
        <authorList>
            <person name="Modena P."/>
            <person name="Lualdi E."/>
            <person name="Facchinetti F."/>
            <person name="Galli L."/>
            <person name="Teixeira M.R."/>
            <person name="Pilotti S."/>
            <person name="Sozzi G."/>
        </authorList>
    </citation>
    <scope>DISEASE</scope>
</reference>
<reference key="23">
    <citation type="journal article" date="2006" name="Mol. Cell. Proteomics">
        <title>Transgenic mouse proteomics identifies new 14-3-3-associated proteins involved in cytoskeletal rearrangements and cell signaling.</title>
        <authorList>
            <person name="Angrand P.O."/>
            <person name="Segura I."/>
            <person name="Voelkel P."/>
            <person name="Ghidelli S."/>
            <person name="Terry R."/>
            <person name="Brajenovic M."/>
            <person name="Vintersten K."/>
            <person name="Klein R."/>
            <person name="Superti-Furga G."/>
            <person name="Drewes G."/>
            <person name="Kuster B."/>
            <person name="Bouwmeester T."/>
            <person name="Acker-Palmer A."/>
        </authorList>
    </citation>
    <scope>INTERACTION WITH YWHAZ</scope>
</reference>
<reference key="24">
    <citation type="journal article" date="2007" name="Science">
        <title>ATM and ATR substrate analysis reveals extensive protein networks responsive to DNA damage.</title>
        <authorList>
            <person name="Matsuoka S."/>
            <person name="Ballif B.A."/>
            <person name="Smogorzewska A."/>
            <person name="McDonald E.R. III"/>
            <person name="Hurov K.E."/>
            <person name="Luo J."/>
            <person name="Bakalarski C.E."/>
            <person name="Zhao Z."/>
            <person name="Solimini N."/>
            <person name="Lerenthal Y."/>
            <person name="Shiloh Y."/>
            <person name="Gygi S.P."/>
            <person name="Elledge S.J."/>
        </authorList>
    </citation>
    <scope>PHOSPHORYLATION [LARGE SCALE ANALYSIS] AT SER-129</scope>
    <scope>IDENTIFICATION BY MASS SPECTROMETRY [LARGE SCALE ANALYSIS]</scope>
    <source>
        <tissue>Embryonic kidney</tissue>
    </source>
</reference>
<reference key="25">
    <citation type="journal article" date="2010" name="EMBO J.">
        <title>Crosstalk between C/EBPbeta phosphorylation, arginine methylation, and SWI/SNF/Mediator implies an indexing transcription factor code.</title>
        <authorList>
            <person name="Kowenz-Leutz E."/>
            <person name="Pless O."/>
            <person name="Dittmar G."/>
            <person name="Knoblich M."/>
            <person name="Leutz A."/>
        </authorList>
    </citation>
    <scope>INTERACTION WITH CEBPB</scope>
</reference>
<reference key="26">
    <citation type="journal article" date="2010" name="J. Biol. Chem.">
        <title>Requiem protein links RelB/p52 and the Brm-type SWI/SNF complex in a noncanonical NF-kappaB pathway.</title>
        <authorList>
            <person name="Tando T."/>
            <person name="Ishizaka A."/>
            <person name="Watanabe H."/>
            <person name="Ito T."/>
            <person name="Iida S."/>
            <person name="Haraguchi T."/>
            <person name="Mizutani T."/>
            <person name="Izumi T."/>
            <person name="Isobe T."/>
            <person name="Akiyama T."/>
            <person name="Inoue J."/>
            <person name="Iba H."/>
        </authorList>
    </citation>
    <scope>INTERACTION WITH DEPF2</scope>
</reference>
<reference key="27">
    <citation type="journal article" date="2011" name="BMC Syst. Biol.">
        <title>Initial characterization of the human central proteome.</title>
        <authorList>
            <person name="Burkard T.R."/>
            <person name="Planyavsky M."/>
            <person name="Kaupe I."/>
            <person name="Breitwieser F.P."/>
            <person name="Buerckstuemmer T."/>
            <person name="Bennett K.L."/>
            <person name="Superti-Furga G."/>
            <person name="Colinge J."/>
        </authorList>
    </citation>
    <scope>IDENTIFICATION BY MASS SPECTROMETRY [LARGE SCALE ANALYSIS]</scope>
</reference>
<reference key="28">
    <citation type="journal article" date="2017" name="Nat. Struct. Mol. Biol.">
        <title>Site-specific mapping of the human SUMO proteome reveals co-modification with phosphorylation.</title>
        <authorList>
            <person name="Hendriks I.A."/>
            <person name="Lyon D."/>
            <person name="Young C."/>
            <person name="Jensen L.J."/>
            <person name="Vertegaal A.C."/>
            <person name="Nielsen M.L."/>
        </authorList>
    </citation>
    <scope>SUMOYLATION [LARGE SCALE ANALYSIS] AT LYS-106; LYS-108; LYS-124 AND LYS-161</scope>
    <scope>IDENTIFICATION BY MASS SPECTROMETRY [LARGE SCALE ANALYSIS]</scope>
</reference>
<reference key="29">
    <citation type="journal article" date="2005" name="Mol. Cell. Biol.">
        <title>Human SWI/SNF generates abundant, structurally altered dinucleosomes on polynucleosomal templates.</title>
        <authorList>
            <person name="Ulyanova N.P."/>
            <person name="Schnitzler G.R."/>
        </authorList>
    </citation>
    <scope>FUNCTION OF BAF COMPLEX IN CHROMATIN REMODELING</scope>
</reference>
<reference key="30">
    <citation type="journal article" date="2008" name="Genes Dev.">
        <title>Regulation of muscle development by DPF3, a novel histone acetylation and methylation reader of the BAF chromatin remodeling complex.</title>
        <authorList>
            <person name="Lange M."/>
            <person name="Kaynak B."/>
            <person name="Forster U.B."/>
            <person name="Toenjes M."/>
            <person name="Fischer J.J."/>
            <person name="Grimm C."/>
            <person name="Schlesinger J."/>
            <person name="Just S."/>
            <person name="Dunkel I."/>
            <person name="Krueger T."/>
            <person name="Mebus S."/>
            <person name="Lehrach H."/>
            <person name="Lurz R."/>
            <person name="Gobom J."/>
            <person name="Rottbauer W."/>
            <person name="Abdelilah-Seyfried S."/>
            <person name="Sperling S."/>
        </authorList>
    </citation>
    <scope>IDENTIFICATION IN THE BAF COMPLEX</scope>
    <scope>IDENTIFICATION BY MASS SPECTROMETRY</scope>
</reference>
<reference key="31">
    <citation type="journal article" date="2007" name="Am. J. Hum. Genet.">
        <title>Germline mutation of INI1/SMARCB1 in familial schwannomatosis.</title>
        <authorList>
            <person name="Hulsebos T.J.M."/>
            <person name="Plomp A.S."/>
            <person name="Wolterman R.A."/>
            <person name="Robanus-Maandag E.C."/>
            <person name="Baas F."/>
            <person name="Wesseling P."/>
        </authorList>
    </citation>
    <scope>INVOLVEMENT IN SWN1</scope>
</reference>
<reference key="32">
    <citation type="journal article" date="2008" name="Hum. Mutat.">
        <title>Evidence of a four-hit mechanism involving SMARCB1 and NF2 in schwannomatosis-associated schwannomas.</title>
        <authorList>
            <person name="Sestini R."/>
            <person name="Bacci C."/>
            <person name="Provenzano A."/>
            <person name="Genuardi M."/>
            <person name="Papi L."/>
        </authorList>
    </citation>
    <scope>INVOLVEMENT IN SWN1</scope>
</reference>
<reference key="33">
    <citation type="journal article" date="2012" name="J. Mol. Cell Biol.">
        <title>Human PIH1 associates with histone H4 to mediate the glucose-dependent enhancement of pre-rRNA synthesis.</title>
        <authorList>
            <person name="Zhai N."/>
            <person name="Zhao Z.L."/>
            <person name="Cheng M.B."/>
            <person name="Di Y.W."/>
            <person name="Yan H.X."/>
            <person name="Cao C.Y."/>
            <person name="Dai H."/>
            <person name="Zhang Y."/>
            <person name="Shen Y.F."/>
        </authorList>
    </citation>
    <scope>INTERACTION WITH PIH1D1</scope>
</reference>
<reference key="34">
    <citation type="journal article" date="2012" name="J. Biol. Chem.">
        <title>SWI/SNF chromatin-remodeling factors: multiscale analyses and diverse functions.</title>
        <authorList>
            <person name="Euskirchen G."/>
            <person name="Auerbach R.K."/>
            <person name="Snyder M."/>
        </authorList>
    </citation>
    <scope>REVIEW ON SWI/SNF CHROMATIN REMODELING COMPLEXES</scope>
</reference>
<reference key="35">
    <citation type="journal article" date="2014" name="Cell Death Dis.">
        <title>The cockayne syndrome B protein is essential for neuronal differentiation and neuritogenesis.</title>
        <authorList>
            <person name="Ciaffardini F."/>
            <person name="Nicolai S."/>
            <person name="Caputo M."/>
            <person name="Canu G."/>
            <person name="Paccosi E."/>
            <person name="Costantino M."/>
            <person name="Frontini M."/>
            <person name="Balajee A.S."/>
            <person name="Proietti-De-Santis L."/>
        </authorList>
    </citation>
    <scope>INTERACTION WITH ERCC6</scope>
</reference>
<reference key="36">
    <citation type="journal article" date="2015" name="Sci. Adv.">
        <title>Mammalian SWI/SNF chromatin remodeling complexes and cancer: Mechanistic insights gained from human genomics.</title>
        <authorList>
            <person name="Kadoch C."/>
            <person name="Crabtree G.R."/>
        </authorList>
    </citation>
    <scope>REVIEW ON SWI/SNF CHROMATIN REMODELING COMPLEXES</scope>
</reference>
<reference key="37">
    <citation type="journal article" date="2013" name="Hum. Mol. Genet.">
        <title>A comprehensive molecular study on Coffin-Siris and Nicolaides-Baraitser syndromes identifies a broad molecular and clinical spectrum converging on altered chromatin remodeling.</title>
        <authorList>
            <person name="Wieczorek D."/>
            <person name="Boegershausen N."/>
            <person name="Beleggia F."/>
            <person name="Steiner-Haldenstaett S."/>
            <person name="Pohl E."/>
            <person name="Li Y."/>
            <person name="Milz E."/>
            <person name="Martin M."/>
            <person name="Thiele H."/>
            <person name="Altmueller J."/>
            <person name="Alanay Y."/>
            <person name="Kayserili H."/>
            <person name="Klein-Hitpass L."/>
            <person name="Boehringer S."/>
            <person name="Wollstein A."/>
            <person name="Albrecht B."/>
            <person name="Boduroglu K."/>
            <person name="Caliebe A."/>
            <person name="Chrzanowska K."/>
            <person name="Cogulu O."/>
            <person name="Cristofoli F."/>
            <person name="Czeschik J.C."/>
            <person name="Devriendt K."/>
            <person name="Dotti M.T."/>
            <person name="Elcioglu N."/>
            <person name="Gener B."/>
            <person name="Goecke T.O."/>
            <person name="Krajewska-Walasek M."/>
            <person name="Guillen-Navarro E."/>
            <person name="Hayek J."/>
            <person name="Houge G."/>
            <person name="Kilic E."/>
            <person name="Simsek-Kiper P.O."/>
            <person name="Lopez-Gonzalez V."/>
            <person name="Kuechler A."/>
            <person name="Lyonnet S."/>
            <person name="Mari F."/>
            <person name="Marozza A."/>
            <person name="Mathieu Dramard M."/>
            <person name="Mikat B."/>
            <person name="Morin G."/>
            <person name="Morice-Picard F."/>
            <person name="Ozkinay F."/>
            <person name="Rauch A."/>
            <person name="Renieri A."/>
            <person name="Tinschert S."/>
            <person name="Utine G.E."/>
            <person name="Vilain C."/>
            <person name="Vivarelli R."/>
            <person name="Zweier C."/>
            <person name="Nuernberg P."/>
            <person name="Rahmann S."/>
            <person name="Vermeesch J."/>
            <person name="Luedecke H.J."/>
            <person name="Zeschnigk M."/>
            <person name="Wollnik B."/>
        </authorList>
    </citation>
    <scope>INVOLVEMENT IN CSS3</scope>
    <scope>VARIANTS CSS3 CYS-366 AND GLN-374</scope>
</reference>
<reference key="38">
    <citation type="journal article" date="2015" name="Structure">
        <title>The SWI/SNF subunit INI1 contains an N-terminal winged helix DNA binding domain that is a target for mutations in schwannomatosis.</title>
        <authorList>
            <person name="Allen M.D."/>
            <person name="Freund S.M."/>
            <person name="Zinzalla G."/>
            <person name="Bycroft M."/>
        </authorList>
    </citation>
    <scope>STRUCTURE BY NMR OF 2-113</scope>
    <scope>DOMAIN</scope>
    <scope>DNA-BINDING</scope>
</reference>
<reference key="39">
    <citation type="journal article" date="2012" name="Am. J. Hum. Genet.">
        <title>Disruption of an EHMT1-associated chromatin-modification module causes intellectual disability.</title>
        <authorList>
            <person name="Kleefstra T."/>
            <person name="Kramer J.M."/>
            <person name="Neveling K."/>
            <person name="Willemsen M.H."/>
            <person name="Koemans T.S."/>
            <person name="Vissers L.E."/>
            <person name="Wissink-Lindhout W."/>
            <person name="Fenckova M."/>
            <person name="van den Akker W.M."/>
            <person name="Kasri N.N."/>
            <person name="Nillesen W.M."/>
            <person name="Prescott T."/>
            <person name="Clark R.D."/>
            <person name="Devriendt K."/>
            <person name="van Reeuwijk J."/>
            <person name="de Brouwer A.P."/>
            <person name="Gilissen C."/>
            <person name="Zhou H."/>
            <person name="Brunner H.G."/>
            <person name="Veltman J.A."/>
            <person name="Schenck A."/>
            <person name="van Bokhoven H."/>
        </authorList>
    </citation>
    <scope>VARIANT CSS3 HIS-37</scope>
</reference>
<reference key="40">
    <citation type="journal article" date="2012" name="Nat. Genet.">
        <title>Mutations affecting components of the SWI/SNF complex cause Coffin-Siris syndrome.</title>
        <authorList>
            <person name="Tsurusaki Y."/>
            <person name="Okamoto N."/>
            <person name="Ohashi H."/>
            <person name="Kosho T."/>
            <person name="Imai Y."/>
            <person name="Hibi-Ko Y."/>
            <person name="Kaname T."/>
            <person name="Naritomi K."/>
            <person name="Kawame H."/>
            <person name="Wakui K."/>
            <person name="Fukushima Y."/>
            <person name="Homma T."/>
            <person name="Kato M."/>
            <person name="Hiraki Y."/>
            <person name="Yamagata T."/>
            <person name="Yano S."/>
            <person name="Mizuno S."/>
            <person name="Sakazume S."/>
            <person name="Ishii T."/>
            <person name="Nagai T."/>
            <person name="Shiina M."/>
            <person name="Ogata K."/>
            <person name="Ohta T."/>
            <person name="Niikawa N."/>
            <person name="Miyatake S."/>
            <person name="Okada I."/>
            <person name="Mizuguchi T."/>
            <person name="Doi H."/>
            <person name="Saitsu H."/>
            <person name="Miyake N."/>
            <person name="Matsumoto N."/>
        </authorList>
    </citation>
    <scope>VARIANTS CSS3 LYS-364 DEL AND HIS-377</scope>
</reference>
<organism>
    <name type="scientific">Homo sapiens</name>
    <name type="common">Human</name>
    <dbReference type="NCBI Taxonomy" id="9606"/>
    <lineage>
        <taxon>Eukaryota</taxon>
        <taxon>Metazoa</taxon>
        <taxon>Chordata</taxon>
        <taxon>Craniata</taxon>
        <taxon>Vertebrata</taxon>
        <taxon>Euteleostomi</taxon>
        <taxon>Mammalia</taxon>
        <taxon>Eutheria</taxon>
        <taxon>Euarchontoglires</taxon>
        <taxon>Primates</taxon>
        <taxon>Haplorrhini</taxon>
        <taxon>Catarrhini</taxon>
        <taxon>Hominidae</taxon>
        <taxon>Homo</taxon>
    </lineage>
</organism>
<keyword id="KW-0002">3D-structure</keyword>
<keyword id="KW-0010">Activator</keyword>
<keyword id="KW-0025">Alternative splicing</keyword>
<keyword id="KW-0131">Cell cycle</keyword>
<keyword id="KW-0156">Chromatin regulator</keyword>
<keyword id="KW-0225">Disease variant</keyword>
<keyword id="KW-0238">DNA-binding</keyword>
<keyword id="KW-0945">Host-virus interaction</keyword>
<keyword id="KW-1063">Hypotrichosis</keyword>
<keyword id="KW-0991">Intellectual disability</keyword>
<keyword id="KW-1017">Isopeptide bond</keyword>
<keyword id="KW-0524">Neurogenesis</keyword>
<keyword id="KW-0539">Nucleus</keyword>
<keyword id="KW-0597">Phosphoprotein</keyword>
<keyword id="KW-1267">Proteomics identification</keyword>
<keyword id="KW-1185">Reference proteome</keyword>
<keyword id="KW-0677">Repeat</keyword>
<keyword id="KW-0804">Transcription</keyword>
<keyword id="KW-0805">Transcription regulation</keyword>
<keyword id="KW-0043">Tumor suppressor</keyword>
<keyword id="KW-0832">Ubl conjugation</keyword>
<name>SNF5_HUMAN</name>
<proteinExistence type="evidence at protein level"/>
<gene>
    <name type="primary">SMARCB1</name>
    <name type="synonym">BAF47</name>
    <name type="synonym">INI1</name>
    <name type="synonym">SNF5L1</name>
</gene>
<evidence type="ECO:0000250" key="1">
    <source>
        <dbReference type="UniProtKB" id="Q9Z0H3"/>
    </source>
</evidence>
<evidence type="ECO:0000269" key="2">
    <source>
    </source>
</evidence>
<evidence type="ECO:0000269" key="3">
    <source>
    </source>
</evidence>
<evidence type="ECO:0000269" key="4">
    <source>
    </source>
</evidence>
<evidence type="ECO:0000269" key="5">
    <source>
    </source>
</evidence>
<evidence type="ECO:0000269" key="6">
    <source>
    </source>
</evidence>
<evidence type="ECO:0000269" key="7">
    <source>
    </source>
</evidence>
<evidence type="ECO:0000269" key="8">
    <source>
    </source>
</evidence>
<evidence type="ECO:0000269" key="9">
    <source>
    </source>
</evidence>
<evidence type="ECO:0000269" key="10">
    <source>
    </source>
</evidence>
<evidence type="ECO:0000269" key="11">
    <source>
    </source>
</evidence>
<evidence type="ECO:0000269" key="12">
    <source>
    </source>
</evidence>
<evidence type="ECO:0000269" key="13">
    <source>
    </source>
</evidence>
<evidence type="ECO:0000269" key="14">
    <source>
    </source>
</evidence>
<evidence type="ECO:0000269" key="15">
    <source>
    </source>
</evidence>
<evidence type="ECO:0000269" key="16">
    <source>
    </source>
</evidence>
<evidence type="ECO:0000269" key="17">
    <source>
    </source>
</evidence>
<evidence type="ECO:0000269" key="18">
    <source>
    </source>
</evidence>
<evidence type="ECO:0000269" key="19">
    <source>
    </source>
</evidence>
<evidence type="ECO:0000269" key="20">
    <source>
    </source>
</evidence>
<evidence type="ECO:0000269" key="21">
    <source>
    </source>
</evidence>
<evidence type="ECO:0000269" key="22">
    <source>
    </source>
</evidence>
<evidence type="ECO:0000269" key="23">
    <source>
    </source>
</evidence>
<evidence type="ECO:0000269" key="24">
    <source>
    </source>
</evidence>
<evidence type="ECO:0000269" key="25">
    <source>
    </source>
</evidence>
<evidence type="ECO:0000269" key="26">
    <source>
    </source>
</evidence>
<evidence type="ECO:0000269" key="27">
    <source>
    </source>
</evidence>
<evidence type="ECO:0000269" key="28">
    <source>
    </source>
</evidence>
<evidence type="ECO:0000303" key="29">
    <source>
    </source>
</evidence>
<evidence type="ECO:0000303" key="30">
    <source>
    </source>
</evidence>
<evidence type="ECO:0000303" key="31">
    <source>
    </source>
</evidence>
<evidence type="ECO:0000303" key="32">
    <source>
    </source>
</evidence>
<evidence type="ECO:0000303" key="33">
    <source>
    </source>
</evidence>
<evidence type="ECO:0000303" key="34">
    <source ref="4"/>
</evidence>
<evidence type="ECO:0000305" key="35"/>
<evidence type="ECO:0000305" key="36">
    <source>
    </source>
</evidence>
<evidence type="ECO:0007744" key="37">
    <source>
    </source>
</evidence>
<evidence type="ECO:0007744" key="38">
    <source>
    </source>
</evidence>
<evidence type="ECO:0007829" key="39">
    <source>
        <dbReference type="PDB" id="5AJ1"/>
    </source>
</evidence>
<evidence type="ECO:0007829" key="40">
    <source>
        <dbReference type="PDB" id="5GJK"/>
    </source>
</evidence>
<evidence type="ECO:0007829" key="41">
    <source>
        <dbReference type="PDB" id="6AX5"/>
    </source>
</evidence>
<evidence type="ECO:0007829" key="42">
    <source>
        <dbReference type="PDB" id="6KAG"/>
    </source>
</evidence>
<evidence type="ECO:0007829" key="43">
    <source>
        <dbReference type="PDB" id="6KZ7"/>
    </source>
</evidence>
<evidence type="ECO:0007829" key="44">
    <source>
        <dbReference type="PDB" id="6LTH"/>
    </source>
</evidence>
<evidence type="ECO:0007829" key="45">
    <source>
        <dbReference type="PDB" id="7VDV"/>
    </source>
</evidence>